<proteinExistence type="evidence at protein level"/>
<sequence length="136" mass="15328">MARTKQTARKSTGGKAPRKQLATKAARKSAPSTGGVKKPHRYRPGTVALREIRRYQKSTELLIRKLPFQRLVREIAQDFKTDLRFQSAAIGALQEASEAYLVGLFEDTNLCAIHAKRVTIMPKDIQLARRIRGERA</sequence>
<evidence type="ECO:0000250" key="1">
    <source>
        <dbReference type="UniProtKB" id="P68431"/>
    </source>
</evidence>
<evidence type="ECO:0000250" key="2">
    <source>
        <dbReference type="UniProtKB" id="P68433"/>
    </source>
</evidence>
<evidence type="ECO:0000250" key="3">
    <source>
        <dbReference type="UniProtKB" id="P84244"/>
    </source>
</evidence>
<evidence type="ECO:0000250" key="4">
    <source>
        <dbReference type="UniProtKB" id="P84245"/>
    </source>
</evidence>
<evidence type="ECO:0000250" key="5">
    <source>
        <dbReference type="UniProtKB" id="Q71DI3"/>
    </source>
</evidence>
<evidence type="ECO:0000256" key="6">
    <source>
        <dbReference type="SAM" id="MobiDB-lite"/>
    </source>
</evidence>
<evidence type="ECO:0000269" key="7">
    <source>
    </source>
</evidence>
<evidence type="ECO:0000269" key="8">
    <source>
    </source>
</evidence>
<evidence type="ECO:0000269" key="9">
    <source>
    </source>
</evidence>
<evidence type="ECO:0000269" key="10">
    <source>
    </source>
</evidence>
<evidence type="ECO:0000269" key="11">
    <source>
    </source>
</evidence>
<evidence type="ECO:0000269" key="12">
    <source>
    </source>
</evidence>
<evidence type="ECO:0000269" key="13">
    <source>
    </source>
</evidence>
<evidence type="ECO:0000269" key="14">
    <source>
    </source>
</evidence>
<evidence type="ECO:0000269" key="15">
    <source>
    </source>
</evidence>
<evidence type="ECO:0000269" key="16">
    <source>
    </source>
</evidence>
<evidence type="ECO:0000269" key="17">
    <source>
    </source>
</evidence>
<evidence type="ECO:0000269" key="18">
    <source>
    </source>
</evidence>
<evidence type="ECO:0000269" key="19">
    <source>
    </source>
</evidence>
<evidence type="ECO:0000269" key="20">
    <source>
    </source>
</evidence>
<evidence type="ECO:0000269" key="21">
    <source>
    </source>
</evidence>
<evidence type="ECO:0000269" key="22">
    <source>
    </source>
</evidence>
<evidence type="ECO:0000269" key="23">
    <source>
    </source>
</evidence>
<evidence type="ECO:0000269" key="24">
    <source>
    </source>
</evidence>
<evidence type="ECO:0000269" key="25">
    <source>
    </source>
</evidence>
<evidence type="ECO:0000269" key="26">
    <source>
    </source>
</evidence>
<evidence type="ECO:0000269" key="27">
    <source>
    </source>
</evidence>
<evidence type="ECO:0000269" key="28">
    <source>
    </source>
</evidence>
<evidence type="ECO:0000269" key="29">
    <source>
    </source>
</evidence>
<evidence type="ECO:0000269" key="30">
    <source>
    </source>
</evidence>
<evidence type="ECO:0000269" key="31">
    <source>
    </source>
</evidence>
<evidence type="ECO:0000269" key="32">
    <source>
    </source>
</evidence>
<evidence type="ECO:0000269" key="33">
    <source>
    </source>
</evidence>
<evidence type="ECO:0000269" key="34">
    <source>
    </source>
</evidence>
<evidence type="ECO:0000269" key="35">
    <source>
    </source>
</evidence>
<evidence type="ECO:0000269" key="36">
    <source>
    </source>
</evidence>
<evidence type="ECO:0000269" key="37">
    <source>
    </source>
</evidence>
<evidence type="ECO:0000269" key="38">
    <source>
    </source>
</evidence>
<evidence type="ECO:0000269" key="39">
    <source>
    </source>
</evidence>
<evidence type="ECO:0000269" key="40">
    <source>
    </source>
</evidence>
<evidence type="ECO:0000269" key="41">
    <source>
    </source>
</evidence>
<evidence type="ECO:0000269" key="42">
    <source>
    </source>
</evidence>
<evidence type="ECO:0000269" key="43">
    <source>
    </source>
</evidence>
<evidence type="ECO:0000269" key="44">
    <source>
    </source>
</evidence>
<evidence type="ECO:0000269" key="45">
    <source>
    </source>
</evidence>
<evidence type="ECO:0000269" key="46">
    <source>
    </source>
</evidence>
<evidence type="ECO:0000269" key="47">
    <source>
    </source>
</evidence>
<evidence type="ECO:0000269" key="48">
    <source>
    </source>
</evidence>
<evidence type="ECO:0000269" key="49">
    <source>
    </source>
</evidence>
<evidence type="ECO:0000269" key="50">
    <source>
    </source>
</evidence>
<evidence type="ECO:0000269" key="51">
    <source>
    </source>
</evidence>
<evidence type="ECO:0000269" key="52">
    <source>
    </source>
</evidence>
<evidence type="ECO:0000269" key="53">
    <source>
    </source>
</evidence>
<evidence type="ECO:0000269" key="54">
    <source>
    </source>
</evidence>
<evidence type="ECO:0000269" key="55">
    <source>
    </source>
</evidence>
<evidence type="ECO:0000269" key="56">
    <source>
    </source>
</evidence>
<evidence type="ECO:0000269" key="57">
    <source>
    </source>
</evidence>
<evidence type="ECO:0000269" key="58">
    <source>
    </source>
</evidence>
<evidence type="ECO:0000269" key="59">
    <source>
    </source>
</evidence>
<evidence type="ECO:0000269" key="60">
    <source>
    </source>
</evidence>
<evidence type="ECO:0000269" key="61">
    <source>
    </source>
</evidence>
<evidence type="ECO:0000269" key="62">
    <source>
    </source>
</evidence>
<evidence type="ECO:0000269" key="63">
    <source>
    </source>
</evidence>
<evidence type="ECO:0000269" key="64">
    <source>
    </source>
</evidence>
<evidence type="ECO:0000269" key="65">
    <source>
    </source>
</evidence>
<evidence type="ECO:0000269" key="66">
    <source>
    </source>
</evidence>
<evidence type="ECO:0000269" key="67">
    <source>
    </source>
</evidence>
<evidence type="ECO:0000269" key="68">
    <source>
    </source>
</evidence>
<evidence type="ECO:0000269" key="69">
    <source>
    </source>
</evidence>
<evidence type="ECO:0000269" key="70">
    <source>
    </source>
</evidence>
<evidence type="ECO:0000269" key="71">
    <source>
    </source>
</evidence>
<evidence type="ECO:0000269" key="72">
    <source>
    </source>
</evidence>
<evidence type="ECO:0000305" key="73"/>
<evidence type="ECO:0000305" key="74">
    <source>
    </source>
</evidence>
<evidence type="ECO:0000305" key="75">
    <source>
    </source>
</evidence>
<evidence type="ECO:0000312" key="76">
    <source>
        <dbReference type="HGNC" id="HGNC:4764"/>
    </source>
</evidence>
<evidence type="ECO:0000312" key="77">
    <source>
        <dbReference type="HGNC" id="HGNC:4765"/>
    </source>
</evidence>
<evidence type="ECO:0007744" key="78">
    <source>
        <dbReference type="PDB" id="7A08"/>
    </source>
</evidence>
<evidence type="ECO:0007744" key="79">
    <source>
        <dbReference type="PDB" id="7CIZ"/>
    </source>
</evidence>
<evidence type="ECO:0007744" key="80">
    <source>
        <dbReference type="PDB" id="7CJ0"/>
    </source>
</evidence>
<evidence type="ECO:0007744" key="81">
    <source>
    </source>
</evidence>
<evidence type="ECO:0007744" key="82">
    <source>
    </source>
</evidence>
<evidence type="ECO:0007744" key="83">
    <source>
    </source>
</evidence>
<evidence type="ECO:0007829" key="84">
    <source>
        <dbReference type="PDB" id="3QL9"/>
    </source>
</evidence>
<evidence type="ECO:0007829" key="85">
    <source>
        <dbReference type="PDB" id="4GY5"/>
    </source>
</evidence>
<evidence type="ECO:0007829" key="86">
    <source>
        <dbReference type="PDB" id="4H9N"/>
    </source>
</evidence>
<evidence type="ECO:0007829" key="87">
    <source>
        <dbReference type="PDB" id="5DX0"/>
    </source>
</evidence>
<evidence type="ECO:0007829" key="88">
    <source>
        <dbReference type="PDB" id="5JLB"/>
    </source>
</evidence>
<evidence type="ECO:0007829" key="89">
    <source>
        <dbReference type="PDB" id="5X7X"/>
    </source>
</evidence>
<evidence type="ECO:0007829" key="90">
    <source>
        <dbReference type="PDB" id="6PZV"/>
    </source>
</evidence>
<evidence type="ECO:0007829" key="91">
    <source>
        <dbReference type="PDB" id="7CIZ"/>
    </source>
</evidence>
<comment type="function">
    <text evidence="11 17 20">Variant histone H3 which replaces conventional H3 in a wide range of nucleosomes in active genes. Constitutes the predominant form of histone H3 in non-dividing cells and is incorporated into chromatin independently of DNA synthesis. Deposited at sites of nucleosomal displacement throughout transcribed genes, suggesting that it represents an epigenetic imprint of transcriptionally active chromatin. Nucleosomes wrap and compact DNA into chromatin, limiting DNA accessibility to the cellular machineries which require DNA as a template. Histones thereby play a central role in transcription regulation, DNA repair, DNA replication and chromosomal stability. DNA accessibility is regulated via a complex set of post-translational modifications of histones, also called histone code, and nucleosome remodeling.</text>
</comment>
<comment type="subunit">
    <text evidence="11 34 37 48 68 70">The nucleosome is a histone octamer containing two molecules each of H2A, H2B, H3 and H4 assembled in one H3-H4 heterotetramer and two H2A-H2B heterodimers. The octamer wraps approximately 147 bp of DNA. Interacts with HIRA, a chaperone required for its incorporation into nucleosomes. Interacts with ZMYND11; when trimethylated at 'Lys-36' (H3.3K36me3). Found in a co-chaperone complex with DNJC9, MCM2 and histone H3.3-H4 dimers (PubMed:33857403). Within the complex, interacts with DNJC9 (via C-terminus); the interaction is direct (PubMed:33857403). Interacts with ASF1A, MCM2, NASP and SPT2 (PubMed:33857403). Interacts with DAXX; the interaction is direct (PubMed:20504901, PubMed:34876591). Interacts with NASP; NASP is a histone chaperone that stabilizes and maintains a soluble pool of Histone H3-H4 dimers (PubMed:22195965).</text>
</comment>
<comment type="interaction">
    <interactant intactId="EBI-120658">
        <id>P84243</id>
    </interactant>
    <interactant intactId="EBI-1055650">
        <id>Q9NVP2</id>
        <label>ASF1B</label>
    </interactant>
    <organismsDiffer>false</organismsDiffer>
    <experiments>5</experiments>
</comment>
<comment type="interaction">
    <interactant intactId="EBI-120658">
        <id>P84243</id>
    </interactant>
    <interactant intactId="EBI-78219">
        <id>P45973</id>
        <label>CBX5</label>
    </interactant>
    <organismsDiffer>false</organismsDiffer>
    <experiments>3</experiments>
</comment>
<comment type="interaction">
    <interactant intactId="EBI-120658">
        <id>P84243</id>
    </interactant>
    <interactant intactId="EBI-1020839">
        <id>Q13111</id>
        <label>CHAF1A</label>
    </interactant>
    <organismsDiffer>false</organismsDiffer>
    <experiments>3</experiments>
</comment>
<comment type="interaction">
    <interactant intactId="EBI-120658">
        <id>P84243</id>
    </interactant>
    <interactant intactId="EBI-77321">
        <id>Q9UER7</id>
        <label>DAXX</label>
    </interactant>
    <organismsDiffer>false</organismsDiffer>
    <experiments>8</experiments>
</comment>
<comment type="interaction">
    <interactant intactId="EBI-120658">
        <id>P84243</id>
    </interactant>
    <interactant intactId="EBI-287635">
        <id>Q9UER7-1</id>
        <label>DAXX</label>
    </interactant>
    <organismsDiffer>false</organismsDiffer>
    <experiments>21</experiments>
</comment>
<comment type="interaction">
    <interactant intactId="EBI-120658">
        <id>P84243</id>
    </interactant>
    <interactant intactId="EBI-923653">
        <id>Q9Y6K1</id>
        <label>DNMT3A</label>
    </interactant>
    <organismsDiffer>false</organismsDiffer>
    <experiments>7</experiments>
</comment>
<comment type="interaction">
    <interactant intactId="EBI-120658">
        <id>P84243</id>
    </interactant>
    <interactant intactId="EBI-302023">
        <id>P62805</id>
        <label>H4C9</label>
    </interactant>
    <organismsDiffer>false</organismsDiffer>
    <experiments>12</experiments>
</comment>
<comment type="interaction">
    <interactant intactId="EBI-120658">
        <id>P84243</id>
    </interactant>
    <interactant intactId="EBI-7038920">
        <id>P49321-2</id>
        <label>NASP</label>
    </interactant>
    <organismsDiffer>false</organismsDiffer>
    <experiments>3</experiments>
</comment>
<comment type="interaction">
    <interactant intactId="EBI-120658">
        <id>P84243</id>
    </interactant>
    <interactant intactId="EBI-716449">
        <id>Q8IZL8</id>
        <label>PELP1</label>
    </interactant>
    <organismsDiffer>false</organismsDiffer>
    <experiments>11</experiments>
</comment>
<comment type="interaction">
    <interactant intactId="EBI-120658">
        <id>P84243</id>
    </interactant>
    <interactant intactId="EBI-1560087">
        <id>Q5VWG9</id>
        <label>TAF3</label>
    </interactant>
    <organismsDiffer>false</organismsDiffer>
    <experiments>3</experiments>
</comment>
<comment type="interaction">
    <interactant intactId="EBI-120658">
        <id>P84243</id>
    </interactant>
    <interactant intactId="EBI-117801">
        <id>Q9VK33</id>
        <label>Sfmbt</label>
    </interactant>
    <organismsDiffer>true</organismsDiffer>
    <experiments>15</experiments>
</comment>
<comment type="interaction">
    <interactant intactId="EBI-120658">
        <id>P84243</id>
    </interactant>
    <interactant intactId="EBI-647813">
        <id>Q8R5C8</id>
        <label>Zmynd11</label>
    </interactant>
    <organismsDiffer>true</organismsDiffer>
    <experiments>6</experiments>
</comment>
<comment type="subcellular location">
    <subcellularLocation>
        <location>Nucleus</location>
    </subcellularLocation>
    <subcellularLocation>
        <location evidence="70">Chromosome</location>
    </subcellularLocation>
</comment>
<comment type="developmental stage">
    <text>Expressed throughout the cell cycle independently of DNA synthesis.</text>
</comment>
<comment type="domain">
    <text evidence="48">Specific interaction of trimethylated form at 'Lys-36' (H3.3K36me3) with ZMYND11 is mediated by the encapsulation of Ser-32 residue with a composite pocket formed by the tandem bromo-PWWP domains.</text>
</comment>
<comment type="PTM">
    <text evidence="8 12 13 19 21 22 23 26 31 43 72">Acetylation is generally linked to gene activation. Acetylation on Lys-10 (H3K9ac) impairs methylation at Arg-9 (H3R8me2s). Acetylation on Lys-19 (H3K18ac) and Lys-24 (H3K24ac) favors methylation at Arg-18 (H3R17me). Acetylation at Lys-123 (H3K122ac) by EP300/p300 plays a central role in chromatin structure: localizes at the surface of the histone octamer and stimulates transcription, possibly by promoting nucleosome instability.</text>
</comment>
<comment type="PTM">
    <text evidence="12 13 23 24">Citrullination at Arg-9 (H3R8ci) and/or Arg-18 (H3R17ci) by PADI4 impairs methylation and represses transcription.</text>
</comment>
<comment type="PTM">
    <text evidence="12 13 19 21 22 23 26 27 29 30">Asymmetric dimethylation at Arg-18 (H3R17me2a) by CARM1 is linked to gene activation. Symmetric dimethylation at Arg-9 (H3R8me2s) by PRMT5 is linked to gene repression. Asymmetric dimethylation at Arg-3 (H3R2me2a) by PRMT6 is linked to gene repression and is mutually exclusive with H3 Lys-5 methylation (H3K4me2 and H3K4me3). H3R2me2a is present at the 3' of genes regardless of their transcription state and is enriched on inactive promoters, while it is absent on active promoters.</text>
</comment>
<comment type="PTM">
    <text evidence="7 8 9 10 14 15 18 19 21 22 23 25 26 40 72">Specifically enriched in modifications associated with active chromatin such as methylation at Lys-5 (H3K4me), Lys-37 and Lys-80. Methylation at Lys-5 (H3K4me) facilitates subsequent acetylation of H3 and H4. Methylation at Lys-80 (H3K79me) is associated with DNA double-strand break (DSB) responses and is a specific target for TP53BP1. Methylation at Lys-10 (H3K9me) and Lys-28 (H3K27me), which are linked to gene repression, are underrepresented. Methylation at Lys-10 (H3K9me) is a specific target for HP1 proteins (CBX1, CBX3 and CBX5) and prevents subsequent phosphorylation at Ser-11 (H3S10ph) and acetylation of H3 and H4. Methylation at Lys-5 (H3K4me) and Lys-80 (H3K79me) require preliminary monoubiquitination of H2B at 'Lys-120'. Methylation at Lys-10 (H3K9me) and Lys-28 (H3K27me) are enriched in inactive X chromosome chromatin. Monomethylation at Lys-57 (H3K56me1) by EHMT2/G9A in G1 phase promotes interaction with PCNA and is required for DNA replication.</text>
</comment>
<comment type="PTM">
    <text evidence="7 8 9 10 15 16 18 19 21 22 23 26 28 32 33 35 42 72">Phosphorylated at Thr-4 (H3T3ph) by VRK1 (PubMed:31527692). Phosphorylated at Thr-4 (H3T3ph) by HASPIN during prophase and dephosphorylated during anaphase (PubMed:15681610, PubMed:16185088). Phosphorylation at Ser-11 (H3S10ph) by AURKB is crucial for chromosome condensation and cell-cycle progression during mitosis and meiosis. In addition phosphorylation at Ser-11 (H3S10ph) by RPS6KA4 and RPS6KA5 is important during interphase because it enables the transcription of genes following external stimulation, like mitogens, stress, growth factors or UV irradiation and result in the activation of genes, such as c-fos and c-jun. Phosphorylation at Ser-11 (H3S10ph), which is linked to gene activation, prevents methylation at Lys-10 (H3K9me) but facilitates acetylation of H3 and H4. Phosphorylation at Ser-11 (H3S10ph) by AURKB mediates the dissociation of HP1 proteins (CBX1, CBX3 and CBX5) from heterochromatin. Phosphorylation at Ser-11 (H3S10ph) is also an essential regulatory mechanism for neoplastic cell transformation. Phosphorylated at Ser-29 (H3S28ph) by MAP3K20 isoform 1, RPS6KA5 or AURKB during mitosis or upon ultraviolet B irradiation. Phosphorylation at Thr-7 (H3T6ph) by PRKCB is a specific tag for epigenetic transcriptional activation that prevents demethylation of Lys-5 (H3K4me) by LSD1/KDM1A. At centromeres, specifically phosphorylated at Thr-12 (H3T11ph) from prophase to early anaphase, by DAPK3 and PKN1. Phosphorylation at Thr-12 (H3T11ph) by PKN1 or isoform M2 of PKM (PKM2) is a specific tag for epigenetic transcriptional activation that promotes demethylation of Lys-10 (H3K9me) by KDM4C/JMJD2C. Phosphorylation at Tyr-42 (H3Y41ph) by JAK2 promotes exclusion of CBX5 (HP1 alpha) from chromatin. Phosphorylation on Ser-32 (H3S31ph) is specific to regions bordering centromeres in metaphase chromosomes.</text>
</comment>
<comment type="PTM">
    <text evidence="4">Ubiquitinated. Monoubiquitinated by RAG1 in lymphoid cells, monoubiquitination is required for V(D)J recombination (By similarity).</text>
</comment>
<comment type="PTM">
    <text evidence="55">Lysine deamination at Lys-5 (H3K4all) to form allysine is mediated by LOXL2. Allysine formation by LOXL2 only takes place on H3K4me3 and results in gene repression.</text>
</comment>
<comment type="PTM">
    <text evidence="36">Crotonylation (Kcr) is specifically present in male germ cells and marks testis-specific genes in post-meiotic cells, including X-linked genes that escape sex chromosome inactivation in haploid cells. Crotonylation marks active promoters and enhancers and confers resistance to transcriptional repressors. It is also associated with post-meiotically activated genes on autosomes.</text>
</comment>
<comment type="PTM">
    <text evidence="2">Butyrylation of histones marks active promoters and competes with histone acetylation. It is present during late spermatogenesis.</text>
</comment>
<comment type="PTM">
    <text evidence="54 59">Succinylation at Lys-80 (H3K79succ) by KAT2A takes place with a maximum frequency around the transcription start sites of genes (PubMed:29211711). It gives a specific tag for epigenetic transcription activation (PubMed:29211711). Desuccinylation at Lys-123 (H3K122succ) by SIRT7 in response to DNA damage promotes chromatin condensation and double-strand breaks (DSBs) repair (PubMed:27436229).</text>
</comment>
<comment type="PTM">
    <text evidence="60 61 69">Serine ADP-ribosylation by PARP1 or PARP2 constitutes the primary form of ADP-ribosylation of proteins in response to DNA damage (PubMed:29480802, PubMed:34874266). Serine ADP-ribosylation at Ser-11 (H3S10ADPr) promotes recruitment of CHD1L (PubMed:34874266). H3S10ADPr is mutually exclusive with phosphorylation at Ser-11 (H3S10ph) and impairs acetylation at Lys-10 (H3K9ac) (PubMed:30257210).</text>
</comment>
<comment type="PTM">
    <text evidence="62">Serotonylated by TGM2 at Gln-6 (H3Q5ser) during serotonergic neuron differentiation (PubMed:30867594). H3Q5ser is associated with trimethylation of Lys-5 (H3K4me3) and enhances general transcription factor IID (TFIID) complex-binding to H3K4me3, thereby facilitating transcription (PubMed:30867594).</text>
</comment>
<comment type="PTM">
    <text evidence="4 66">Dopaminylated by TGM2 at Gln-6 (H3Q5dop) in ventral tegmental area (VTA) neurons (PubMed:32273471). H3Q5dop mediates neurotransmission-independent role of nuclear dopamine by regulating relapse-related transcriptional plasticity in the reward system (By similarity).</text>
</comment>
<comment type="PTM">
    <text evidence="65">Lactylated in macrophages by EP300/P300 by using lactoyl-CoA directly derived from endogenous or exogenous lactate, leading to stimulates gene transcription.</text>
</comment>
<comment type="disease" evidence="38 39 45">
    <disease id="DI-02566">
        <name>Glioma</name>
        <acronym>GLM</acronym>
        <description>Gliomas are benign or malignant central nervous system neoplasms derived from glial cells. They comprise astrocytomas and glioblastoma multiforme that are derived from astrocytes, oligodendrogliomas derived from oligodendrocytes and ependymomas derived from ependymocytes.</description>
        <dbReference type="MIM" id="137800"/>
    </disease>
    <text evidence="38 39 44 45 46">The gene represented in this entry is involved in disease pathogenesis. H3F3A mutations affecting residues involved in post-translational modifications of histone H3.3 are recurrent in malignant, aggressive gliomas including glioblastoma multiforme (GBM) and diffuse intrinsic pontine glioma (DIPG) (PubMed:22286061, PubMed:22286216). The mechanism through which mutations lead to tumorigenesis involves altered histones methylation, impaired regulation of Polycomb repressive complex 2 (PRC2) activity, and aberrant epigenetic regulation of gene expression (PubMed:23539183, PubMed:23539269, PubMed:23603901).</text>
</comment>
<comment type="disease" evidence="67 70">
    <disease id="DI-06327">
        <name>Bryant-Li-Bhoj neurodevelopmental syndrome 1</name>
        <acronym>BRYLIB1</acronym>
        <description>An autosomal dominant disorder predominantly characterized by global developmental delay, impaired intellectual development, poor or absent speech, and delayed motor milestones. Clinical manifestations are highly variable, including abnormal head shape, dysmorphic facial features, oculomotor abnormalities, feeding problems, and non-specific brain imaging abnormalities. Additional features may include hearing loss, seizures, short stature, and mild skeletal defects.</description>
        <dbReference type="MIM" id="619720"/>
    </disease>
    <text evidence="67 70">The disease is caused by variants affecting the gene represented in this entry. BRYLIB1 is caused by variants in H3-3A.</text>
</comment>
<comment type="disease" evidence="67 70">
    <disease id="DI-06328">
        <name>Bryant-Li-Bhoj neurodevelopmental syndrome 2</name>
        <acronym>BRYLIB2</acronym>
        <description>An autosomal dominant disorder predominantly characterized by global developmental delay, impaired intellectual development, poor or absent speech, and delayed motor milestones. Clinical manifestations are highly variable, including abnormal head shape, dysmorphic facial features, oculomotor abnormalities, feeding problems, and non-specific brain imaging abnormalities. Additional features may include hearing loss, seizures, short stature, and mild skeletal defects.</description>
        <dbReference type="MIM" id="619721"/>
    </disease>
    <text evidence="67 70">The disease is caused by variants affecting the gene represented in this entry. BRYLIB2 is caused by variants in H3-3B.</text>
</comment>
<comment type="disease">
    <text evidence="47">H3F3A and H3F3B mutations affecting residues involved in post-translational modifications of histone H3.3 are implicated in the pathogenesis of some bone and cartilage neoplasms. Mutations have been found with high prevalence in chondroblastoma and giant cell tumors of bone, and with low frequency in osteosarcoma, conventional chondrosarcoma and clear cell chondrosarcoma. Chondroblastoma samples frequently carry a H3F3B mutation affecting residue Lys-37 (H3K36), although H3F3A is mutated in some cases. Most giant cell tumors of bone harbor H3F3A mutations affecting residue Gly-35 (H3G34).</text>
</comment>
<comment type="similarity">
    <text evidence="73">Belongs to the histone H3 family.</text>
</comment>
<comment type="caution">
    <text evidence="55 74 75">The original paper reporting lysine deamination at Lys-5 by LOXL2 has been retracted due to inappropriate manipulation of figure data (PubMed:22483618, PubMed:27392148). However, this modification was confirmed in a subsequent publication (PubMed:27735137).</text>
</comment>
<comment type="online information" name="Wikipedia">
    <link uri="https://en.wikipedia.org/wiki/Histone_H3"/>
    <text>Histone H3 entry</text>
</comment>
<keyword id="KW-0002">3D-structure</keyword>
<keyword id="KW-0007">Acetylation</keyword>
<keyword id="KW-0013">ADP-ribosylation</keyword>
<keyword id="KW-0158">Chromosome</keyword>
<keyword id="KW-0164">Citrullination</keyword>
<keyword id="KW-0903">Direct protein sequencing</keyword>
<keyword id="KW-0225">Disease variant</keyword>
<keyword id="KW-0238">DNA-binding</keyword>
<keyword id="KW-0379">Hydroxylation</keyword>
<keyword id="KW-0991">Intellectual disability</keyword>
<keyword id="KW-0449">Lipoprotein</keyword>
<keyword id="KW-0488">Methylation</keyword>
<keyword id="KW-0544">Nucleosome core</keyword>
<keyword id="KW-0539">Nucleus</keyword>
<keyword id="KW-0597">Phosphoprotein</keyword>
<keyword id="KW-1267">Proteomics identification</keyword>
<keyword id="KW-1185">Reference proteome</keyword>
<keyword id="KW-0832">Ubl conjugation</keyword>
<accession>P84243</accession>
<accession>P06351</accession>
<accession>P33155</accession>
<accession>Q5VV55</accession>
<accession>Q5VV56</accession>
<accession>Q66I33</accession>
<accession>Q9V3W4</accession>
<organism>
    <name type="scientific">Homo sapiens</name>
    <name type="common">Human</name>
    <dbReference type="NCBI Taxonomy" id="9606"/>
    <lineage>
        <taxon>Eukaryota</taxon>
        <taxon>Metazoa</taxon>
        <taxon>Chordata</taxon>
        <taxon>Craniata</taxon>
        <taxon>Vertebrata</taxon>
        <taxon>Euteleostomi</taxon>
        <taxon>Mammalia</taxon>
        <taxon>Eutheria</taxon>
        <taxon>Euarchontoglires</taxon>
        <taxon>Primates</taxon>
        <taxon>Haplorrhini</taxon>
        <taxon>Catarrhini</taxon>
        <taxon>Hominidae</taxon>
        <taxon>Homo</taxon>
    </lineage>
</organism>
<gene>
    <name evidence="76" type="primary">H3-3A</name>
    <name type="synonym">H3.3A</name>
    <name type="synonym">H3F3</name>
    <name type="synonym">H3F3A</name>
    <name type="ORF">PP781</name>
</gene>
<gene>
    <name evidence="77" type="primary">H3-3B</name>
    <name type="synonym">H3.3B</name>
    <name type="synonym">H3F3B</name>
</gene>
<name>H33_HUMAN</name>
<feature type="initiator methionine" description="Removed" evidence="73">
    <location>
        <position position="1"/>
    </location>
</feature>
<feature type="chain" id="PRO_0000221247" description="Histone H3.3">
    <location>
        <begin position="2"/>
        <end position="136"/>
    </location>
</feature>
<feature type="region of interest" description="Disordered" evidence="6">
    <location>
        <begin position="1"/>
        <end position="43"/>
    </location>
</feature>
<feature type="site" description="Interaction with ZMYND11" evidence="48">
    <location>
        <position position="32"/>
    </location>
</feature>
<feature type="modified residue" description="Asymmetric dimethylarginine; by PRMT6; alternate" evidence="27 29 30">
    <location>
        <position position="3"/>
    </location>
</feature>
<feature type="modified residue" description="Citrulline; alternate" evidence="24">
    <location>
        <position position="3"/>
    </location>
</feature>
<feature type="modified residue" description="Phosphothreonine; by HASPIN and VRK1" evidence="15 19 63">
    <location>
        <position position="4"/>
    </location>
</feature>
<feature type="modified residue" description="Allysine; alternate" evidence="55">
    <location>
        <position position="5"/>
    </location>
</feature>
<feature type="modified residue" description="N6,N6,N6-trimethyllysine; alternate" evidence="19 21 22 26">
    <location>
        <position position="5"/>
    </location>
</feature>
<feature type="modified residue" description="N6,N6-dimethyllysine; alternate" evidence="19 21 22 26">
    <location>
        <position position="5"/>
    </location>
</feature>
<feature type="modified residue" description="N6-(2-hydroxyisobutyryl)lysine; alternate" evidence="49">
    <location>
        <position position="5"/>
    </location>
</feature>
<feature type="modified residue" description="N6-(beta-hydroxybutyryl)lysine; alternate" evidence="52">
    <location>
        <position position="5"/>
    </location>
</feature>
<feature type="modified residue" description="N6-acetyllysine; alternate" evidence="26">
    <location>
        <position position="5"/>
    </location>
</feature>
<feature type="modified residue" description="N6-crotonyllysine; alternate" evidence="36 58">
    <location>
        <position position="5"/>
    </location>
</feature>
<feature type="modified residue" description="N6-methyllysine; alternate" evidence="19 21 22 26">
    <location>
        <position position="5"/>
    </location>
</feature>
<feature type="modified residue" description="5-glutamyl dopamine; alternate" evidence="66">
    <location>
        <position position="6"/>
    </location>
</feature>
<feature type="modified residue" description="5-glutamyl serotonin; alternate" evidence="62">
    <location>
        <position position="6"/>
    </location>
</feature>
<feature type="modified residue" description="Phosphothreonine; by PKC" evidence="33">
    <location>
        <position position="7"/>
    </location>
</feature>
<feature type="modified residue" description="Citrulline; alternate" evidence="12 24">
    <location>
        <position position="9"/>
    </location>
</feature>
<feature type="modified residue" description="Symmetric dimethylarginine; by PRMT5; alternate" evidence="3">
    <location>
        <position position="9"/>
    </location>
</feature>
<feature type="modified residue" description="N6,N6,N6-trimethyllysine; alternate" evidence="8 19 21 22 26 72">
    <location>
        <position position="10"/>
    </location>
</feature>
<feature type="modified residue" description="N6,N6-dimethyllysine; alternate" evidence="8 19 21 22 26 72">
    <location>
        <position position="10"/>
    </location>
</feature>
<feature type="modified residue" description="N6-(2-hydroxyisobutyryl)lysine; alternate" evidence="49">
    <location>
        <position position="10"/>
    </location>
</feature>
<feature type="modified residue" description="N6-(beta-hydroxybutyryl)lysine; alternate" evidence="52">
    <location>
        <position position="10"/>
    </location>
</feature>
<feature type="modified residue" description="N6-acetyllysine; alternate" evidence="19 21 22 23 26">
    <location>
        <position position="10"/>
    </location>
</feature>
<feature type="modified residue" description="N6-butyryllysine; alternate" evidence="51">
    <location>
        <position position="10"/>
    </location>
</feature>
<feature type="modified residue" description="N6-crotonyllysine; alternate" evidence="36 58">
    <location>
        <position position="10"/>
    </location>
</feature>
<feature type="modified residue" description="N6-lactoyllysine; alternate" evidence="65">
    <location>
        <position position="10"/>
    </location>
</feature>
<feature type="modified residue" description="N6-methyllysine; alternate" evidence="8 19 21 22 26 72">
    <location>
        <position position="10"/>
    </location>
</feature>
<feature type="modified residue" description="ADP-ribosylserine; alternate" evidence="57 60 69">
    <location>
        <position position="11"/>
    </location>
</feature>
<feature type="modified residue" description="Phosphoserine; alternate; by AURKB, AURKC, RPS6KA3, RPS6KA4 and RPS6KA5" evidence="7 9 10 15 18 19">
    <location>
        <position position="11"/>
    </location>
</feature>
<feature type="modified residue" description="Phosphothreonine; by PKC" evidence="10 28 42">
    <location>
        <position position="12"/>
    </location>
</feature>
<feature type="modified residue" description="N6-(2-hydroxyisobutyryl)lysine; alternate" evidence="49">
    <location>
        <position position="15"/>
    </location>
</feature>
<feature type="modified residue" description="N6-(beta-hydroxybutyryl)lysine; alternate" evidence="52">
    <location>
        <position position="15"/>
    </location>
</feature>
<feature type="modified residue" description="N6-acetyllysine; alternate" evidence="19 21 23 26 72">
    <location>
        <position position="15"/>
    </location>
</feature>
<feature type="modified residue" description="N6-glutaryllysine; alternate" evidence="64">
    <location>
        <position position="15"/>
    </location>
</feature>
<feature type="modified residue" description="N6-lactoyllysine; alternate" evidence="3">
    <location>
        <position position="15"/>
    </location>
</feature>
<feature type="modified residue" description="N6-succinyllysine; alternate" evidence="41">
    <location>
        <position position="15"/>
    </location>
</feature>
<feature type="modified residue" description="Asymmetric dimethylarginine; by CARM1; alternate" evidence="12 13 23">
    <location>
        <position position="18"/>
    </location>
</feature>
<feature type="modified residue" description="Citrulline; alternate" evidence="12 23 24">
    <location>
        <position position="18"/>
    </location>
</feature>
<feature type="modified residue" description="N6-(2-hydroxyisobutyryl)lysine; alternate" evidence="49">
    <location>
        <position position="19"/>
    </location>
</feature>
<feature type="modified residue" description="N6-(beta-hydroxybutyryl)lysine; alternate" evidence="52">
    <location>
        <position position="19"/>
    </location>
</feature>
<feature type="modified residue" description="N6-acetyllysine; alternate" evidence="21 26 71">
    <location>
        <position position="19"/>
    </location>
</feature>
<feature type="modified residue" description="N6-butyryllysine; alternate" evidence="51">
    <location>
        <position position="19"/>
    </location>
</feature>
<feature type="modified residue" description="N6-crotonyllysine; alternate" evidence="36">
    <location>
        <position position="19"/>
    </location>
</feature>
<feature type="modified residue" description="N6-glutaryllysine; alternate" evidence="64">
    <location>
        <position position="19"/>
    </location>
</feature>
<feature type="modified residue" description="N6-lactoyllysine; alternate" evidence="65">
    <location>
        <position position="19"/>
    </location>
</feature>
<feature type="modified residue" description="N6-methyllysine; alternate" evidence="21 26">
    <location>
        <position position="19"/>
    </location>
</feature>
<feature type="modified residue" description="N6-(2-hydroxyisobutyryl)lysine; alternate" evidence="49">
    <location>
        <position position="24"/>
    </location>
</feature>
<feature type="modified residue" description="N6-(beta-hydroxybutyryl)lysine; alternate" evidence="52">
    <location>
        <position position="24"/>
    </location>
</feature>
<feature type="modified residue" description="N6-acetyllysine; alternate" evidence="21 26 72">
    <location>
        <position position="24"/>
    </location>
</feature>
<feature type="modified residue" description="N6-butyryllysine; alternate" evidence="51">
    <location>
        <position position="24"/>
    </location>
</feature>
<feature type="modified residue" description="N6-crotonyllysine; alternate" evidence="36 58">
    <location>
        <position position="24"/>
    </location>
</feature>
<feature type="modified residue" description="N6-glutaryllysine; alternate" evidence="64">
    <location>
        <position position="24"/>
    </location>
</feature>
<feature type="modified residue" description="N6-lactoyllysine; alternate" evidence="65">
    <location>
        <position position="24"/>
    </location>
</feature>
<feature type="modified residue" description="N6-methyllysine; alternate" evidence="26">
    <location>
        <position position="24"/>
    </location>
</feature>
<feature type="modified residue" description="Citrulline" evidence="24">
    <location>
        <position position="27"/>
    </location>
</feature>
<feature type="modified residue" description="N6,N6,N6-trimethyllysine; alternate" evidence="19 21 26 72">
    <location>
        <position position="28"/>
    </location>
</feature>
<feature type="modified residue" description="N6,N6-dimethyllysine; alternate" evidence="19 21 26 72 82">
    <location>
        <position position="28"/>
    </location>
</feature>
<feature type="modified residue" description="N6-(2-hydroxyisobutyryl)lysine; alternate" evidence="49">
    <location>
        <position position="28"/>
    </location>
</feature>
<feature type="modified residue" description="N6-(beta-hydroxybutyryl)lysine; alternate" evidence="52">
    <location>
        <position position="28"/>
    </location>
</feature>
<feature type="modified residue" description="N6-acetyllysine; alternate" evidence="21 26 81">
    <location>
        <position position="28"/>
    </location>
</feature>
<feature type="modified residue" description="N6-crotonyllysine; alternate" evidence="36">
    <location>
        <position position="28"/>
    </location>
</feature>
<feature type="modified residue" description="N6-glutaryllysine; alternate" evidence="64">
    <location>
        <position position="28"/>
    </location>
</feature>
<feature type="modified residue" description="N6-lactoyllysine; alternate" evidence="65">
    <location>
        <position position="28"/>
    </location>
</feature>
<feature type="modified residue" description="N6-methyllysine; alternate" evidence="19 21 26 72">
    <location>
        <position position="28"/>
    </location>
</feature>
<feature type="modified residue" description="ADP-ribosylserine; alternate" evidence="57 60">
    <location>
        <position position="29"/>
    </location>
</feature>
<feature type="modified residue" description="Phosphoserine; alternate; by AURKB, AURKC and RPS6KA5" evidence="7 9 15 16 18 19">
    <location>
        <position position="29"/>
    </location>
</feature>
<feature type="modified residue" description="Phosphoserine" evidence="18 19">
    <location>
        <position position="32"/>
    </location>
</feature>
<feature type="modified residue" description="N6,N6,N6-trimethyllysine; alternate" evidence="19 21 26 72">
    <location>
        <position position="37"/>
    </location>
</feature>
<feature type="modified residue" description="N6,N6-dimethyllysine; alternate" evidence="19 21 26 72">
    <location>
        <position position="37"/>
    </location>
</feature>
<feature type="modified residue" description="N6-(2-hydroxyisobutyryl)lysine; alternate" evidence="49">
    <location>
        <position position="37"/>
    </location>
</feature>
<feature type="modified residue" description="N6-acetyllysine; alternate" evidence="25 26">
    <location>
        <position position="37"/>
    </location>
</feature>
<feature type="modified residue" description="N6-methyllysine; alternate" evidence="19 21 26 72">
    <location>
        <position position="37"/>
    </location>
</feature>
<feature type="modified residue" description="N6-methyllysine" evidence="1">
    <location>
        <position position="38"/>
    </location>
</feature>
<feature type="modified residue" description="Phosphotyrosine" evidence="32">
    <location>
        <position position="42"/>
    </location>
</feature>
<feature type="modified residue" description="N6,N6,N6-trimethyllysine; alternate" evidence="26 40">
    <location>
        <position position="57"/>
    </location>
</feature>
<feature type="modified residue" description="N6-(2-hydroxyisobutyryl)lysine; alternate" evidence="49">
    <location>
        <position position="57"/>
    </location>
</feature>
<feature type="modified residue" description="N6-(beta-hydroxybutyryl)lysine; alternate" evidence="52">
    <location>
        <position position="57"/>
    </location>
</feature>
<feature type="modified residue" description="N6-acetyllysine; alternate" evidence="26">
    <location>
        <position position="57"/>
    </location>
</feature>
<feature type="modified residue" description="N6-crotonyllysine; alternate" evidence="36">
    <location>
        <position position="57"/>
    </location>
</feature>
<feature type="modified residue" description="N6-glutaryllysine; alternate" evidence="64">
    <location>
        <position position="57"/>
    </location>
</feature>
<feature type="modified residue" description="N6-lactoyllysine; alternate" evidence="3">
    <location>
        <position position="57"/>
    </location>
</feature>
<feature type="modified residue" description="N6-methyllysine; by EHMT2; alternate" evidence="26 40">
    <location>
        <position position="57"/>
    </location>
</feature>
<feature type="modified residue" description="N6-succinyllysine; alternate" evidence="41">
    <location>
        <position position="57"/>
    </location>
</feature>
<feature type="modified residue" description="Phosphoserine" evidence="35">
    <location>
        <position position="58"/>
    </location>
</feature>
<feature type="modified residue" description="N6-(2-hydroxyisobutyryl)lysine; alternate" evidence="49">
    <location>
        <position position="65"/>
    </location>
</feature>
<feature type="modified residue" description="N6-methyllysine; alternate" evidence="21 26">
    <location>
        <position position="65"/>
    </location>
</feature>
<feature type="modified residue" description="N6,N6,N6-trimethyllysine; alternate" evidence="3">
    <location>
        <position position="80"/>
    </location>
</feature>
<feature type="modified residue" description="N6,N6-dimethyllysine; alternate" evidence="14 21 26">
    <location>
        <position position="80"/>
    </location>
</feature>
<feature type="modified residue" description="N6-(2-hydroxyisobutyryl)lysine; alternate" evidence="49">
    <location>
        <position position="80"/>
    </location>
</feature>
<feature type="modified residue" description="N6-(beta-hydroxybutyryl)lysine; alternate" evidence="52">
    <location>
        <position position="80"/>
    </location>
</feature>
<feature type="modified residue" description="N6-acetyllysine; alternate" evidence="26">
    <location>
        <position position="80"/>
    </location>
</feature>
<feature type="modified residue" description="N6-glutaryllysine; alternate" evidence="64">
    <location>
        <position position="80"/>
    </location>
</feature>
<feature type="modified residue" description="N6-lactoyllysine; alternate" evidence="65">
    <location>
        <position position="80"/>
    </location>
</feature>
<feature type="modified residue" description="N6-methyllysine; alternate" evidence="14 21 26">
    <location>
        <position position="80"/>
    </location>
</feature>
<feature type="modified residue" description="N6-succinyllysine; alternate" evidence="41 59">
    <location>
        <position position="80"/>
    </location>
</feature>
<feature type="modified residue" description="Phosphothreonine" evidence="35">
    <location>
        <position position="81"/>
    </location>
</feature>
<feature type="modified residue" description="Phosphoserine" evidence="83">
    <location>
        <position position="87"/>
    </location>
</feature>
<feature type="modified residue" description="Phosphothreonine" evidence="5">
    <location>
        <position position="108"/>
    </location>
</feature>
<feature type="modified residue" description="N6-acetyllysine; alternate" evidence="31">
    <location>
        <position position="116"/>
    </location>
</feature>
<feature type="modified residue" description="N6-glutaryllysine; alternate" evidence="64">
    <location>
        <position position="116"/>
    </location>
</feature>
<feature type="modified residue" description="N6-(2-hydroxyisobutyryl)lysine; alternate" evidence="49">
    <location>
        <position position="123"/>
    </location>
</feature>
<feature type="modified residue" description="N6-(beta-hydroxybutyryl)lysine; alternate" evidence="52">
    <location>
        <position position="123"/>
    </location>
</feature>
<feature type="modified residue" description="N6-acetyllysine; alternate" evidence="31 43">
    <location>
        <position position="123"/>
    </location>
</feature>
<feature type="modified residue" description="N6-glutaryllysine; alternate" evidence="64">
    <location>
        <position position="123"/>
    </location>
</feature>
<feature type="modified residue" description="N6-methyllysine; alternate" evidence="21 26">
    <location>
        <position position="123"/>
    </location>
</feature>
<feature type="modified residue" description="N6-succinyllysine; alternate" evidence="41 54">
    <location>
        <position position="123"/>
    </location>
</feature>
<feature type="lipid moiety-binding region" description="N6-decanoyllysine" evidence="71">
    <location>
        <position position="19"/>
    </location>
</feature>
<feature type="sequence variant" id="VAR_087155" description="In BRYLIB2; uncertain significance; no effect on protein abundance." evidence="70">
    <original>A</original>
    <variation>V</variation>
    <location>
        <position position="8"/>
    </location>
</feature>
<feature type="sequence variant" id="VAR_087156" description="In BRYLIB2." evidence="67 70">
    <original>R</original>
    <variation>C</variation>
    <location>
        <position position="9"/>
    </location>
</feature>
<feature type="sequence variant" id="VAR_087157" description="In BRYLIB1." evidence="67">
    <original>R</original>
    <variation>G</variation>
    <location>
        <position position="9"/>
    </location>
</feature>
<feature type="sequence variant" id="VAR_087158" description="In BRYLIB1." evidence="67">
    <original>R</original>
    <variation>S</variation>
    <location>
        <position position="9"/>
    </location>
</feature>
<feature type="sequence variant" id="VAR_087159" description="In BRYLIB2; uncertain significance; no effect on protein abundance." evidence="70">
    <original>K</original>
    <variation>E</variation>
    <location>
        <position position="10"/>
    </location>
</feature>
<feature type="sequence variant" id="VAR_087160" description="In BRYLIB2; uncertain significance." evidence="67">
    <original>S</original>
    <variation>P</variation>
    <location>
        <position position="11"/>
    </location>
</feature>
<feature type="sequence variant" id="VAR_087161" description="In BRYLIB2; uncertain significance." evidence="67">
    <original>G</original>
    <variation>R</variation>
    <location>
        <position position="14"/>
    </location>
</feature>
<feature type="sequence variant" id="VAR_087162" description="In BRYLIB1; uncertain significance." evidence="67">
    <original>A</original>
    <variation>G</variation>
    <location>
        <position position="16"/>
    </location>
</feature>
<feature type="sequence variant" id="VAR_087163" description="In BRYLIB1." evidence="67">
    <original>R</original>
    <variation>G</variation>
    <location>
        <position position="18"/>
    </location>
</feature>
<feature type="sequence variant" id="VAR_087164" description="In BRYLIB1; uncertain significance." evidence="67">
    <original>T</original>
    <variation>I</variation>
    <location>
        <position position="23"/>
    </location>
</feature>
<feature type="sequence variant" id="VAR_087165" description="In BRYLIB2; uncertain significance; no effect on protein abundance." evidence="70">
    <original>T</original>
    <variation>K</variation>
    <location>
        <position position="23"/>
    </location>
</feature>
<feature type="sequence variant" id="VAR_079021" description="In GLM; glioblastoma multiforme samples and diffuse intrinsic pontine glioma; somatic mutation; more prevalent in pediatric than adult malignancies; results in reduced allosteric activation of PRC2 causing a global decrease of H3K27me3 levels; has no effect on H3K4me3 or H3K36me3 levels; dbSNP:rs1057519903." evidence="38 39 44">
    <original>K</original>
    <variation>M</variation>
    <location>
        <position position="28"/>
    </location>
</feature>
<feature type="sequence variant" id="VAR_087166" description="In BRYLIB2; uncertain significance." evidence="67">
    <original>A</original>
    <variation>P</variation>
    <location>
        <position position="30"/>
    </location>
</feature>
<feature type="sequence variant" id="VAR_087167" description="In BRYLIB1; uncertain significance." evidence="67">
    <original>A</original>
    <variation>T</variation>
    <location>
        <position position="30"/>
    </location>
</feature>
<feature type="sequence variant" id="VAR_087168" description="In BRYLIB1; uncertain significance." evidence="67">
    <original>S</original>
    <variation>F</variation>
    <location>
        <position position="32"/>
    </location>
</feature>
<feature type="sequence variant" id="VAR_079022" description="In GLM; glioblastoma multiforme samples; somatic mutation; also found in osteosarcoma samples; results in global decrease of H3K36me2 and H3K36me3 levels; has no effect on H3K27me3 levels; dbSNP:rs1553260624." evidence="38 44">
    <original>G</original>
    <variation>R</variation>
    <location>
        <position position="35"/>
    </location>
</feature>
<feature type="sequence variant" id="VAR_079023" description="In GLM and BRYLIB2; glioblastoma multiforme samples; somatic mutation; affects regulation of gene expression and results in up-regulation of MYCN; results in global decrease of H3K36me2 and H3K36me3 levels; has no effect on H3K27me3 levels." evidence="38 44 45 67">
    <original>G</original>
    <variation>V</variation>
    <location>
        <position position="35"/>
    </location>
</feature>
<feature type="sequence variant" id="VAR_079024" description="Found in giant cell tumors of bone; uncertain significance; somatic mutation." evidence="47">
    <original>G</original>
    <variation>W</variation>
    <location>
        <position position="35"/>
    </location>
</feature>
<feature type="sequence variant" id="VAR_087169" description="In BRYLIB1." evidence="67">
    <original>K</original>
    <variation>E</variation>
    <location>
        <position position="37"/>
    </location>
</feature>
<feature type="sequence variant" id="VAR_079025" description="Found in chondroblastoma and clear cell chondrosarcoma; uncertain significance; somatic mutation; also found in a subset of human papillomavirus-negative head and neck squamous cell carcinomas; uncertain significance; results in global decrease of H3K36me2 and H3K36me3 levels and increased H3K27me3 levels." evidence="47 53 56">
    <original>K</original>
    <variation>M</variation>
    <location>
        <position position="37"/>
    </location>
</feature>
<feature type="sequence variant" id="VAR_087170" description="In BRYLIB2; uncertain significance." evidence="67">
    <original>H</original>
    <variation>R</variation>
    <location>
        <position position="40"/>
    </location>
</feature>
<feature type="sequence variant" id="VAR_087171" description="In BRYLIB1; uncertain significance." evidence="67">
    <original>H</original>
    <variation>Y</variation>
    <location>
        <position position="40"/>
    </location>
</feature>
<feature type="sequence variant" id="VAR_087172" description="In BRYLIB1; uncertain significance; increased protein abundance." evidence="70">
    <original>R</original>
    <variation>C</variation>
    <location>
        <position position="41"/>
    </location>
</feature>
<feature type="sequence variant" id="VAR_087173" description="In BRYLIB1." evidence="67">
    <original>T</original>
    <variation>I</variation>
    <location>
        <position position="46"/>
    </location>
</feature>
<feature type="sequence variant" id="VAR_087174" description="In BRYLIB2; uncertain significance." evidence="67">
    <original>L</original>
    <variation>R</variation>
    <location>
        <position position="49"/>
    </location>
</feature>
<feature type="sequence variant" id="VAR_087175" description="In BRYLIB2; uncertain significance; decreased protein abundance." evidence="70">
    <original>I</original>
    <variation>N</variation>
    <location>
        <position position="52"/>
    </location>
</feature>
<feature type="sequence variant" id="VAR_087176" description="In BRYLIB1; uncertain significance; no effect on protein abundance." evidence="70">
    <original>Q</original>
    <variation>K</variation>
    <location>
        <position position="56"/>
    </location>
</feature>
<feature type="sequence variant" id="VAR_087177" description="In BRYLIB1; uncertain significance." evidence="67">
    <original>L</original>
    <variation>R</variation>
    <location>
        <position position="62"/>
    </location>
</feature>
<feature type="sequence variant" id="VAR_087178" description="In BRYLIB1; uncertain significance." evidence="67">
    <original>D</original>
    <variation>N</variation>
    <location>
        <position position="78"/>
    </location>
</feature>
<feature type="sequence variant" id="VAR_087179" description="In BRYLIB1; uncertain significance." evidence="67">
    <original>D</original>
    <variation>H</variation>
    <location>
        <position position="82"/>
    </location>
</feature>
<feature type="sequence variant" id="VAR_087180" description="In BRYLIB1." evidence="67">
    <original>R</original>
    <variation>C</variation>
    <location>
        <position position="84"/>
    </location>
</feature>
<feature type="sequence variant" id="VAR_087181" description="In BRYLIB1." evidence="67 70">
    <original>G</original>
    <variation>R</variation>
    <location>
        <position position="91"/>
    </location>
</feature>
<feature type="sequence variant" id="VAR_087182" description="In BRYLIB1 and BRYLIB2; uncertain significance." evidence="67">
    <original>N</original>
    <variation>S</variation>
    <location>
        <position position="109"/>
    </location>
</feature>
<feature type="sequence variant" id="VAR_087183" description="In BRYLIB1; uncertain significance." evidence="67">
    <original>I</original>
    <variation>L</variation>
    <location>
        <position position="113"/>
    </location>
</feature>
<feature type="sequence variant" id="VAR_087184" description="In BRYLIB1; uncertain significance." evidence="67">
    <original>I</original>
    <variation>V</variation>
    <location>
        <position position="113"/>
    </location>
</feature>
<feature type="sequence variant" id="VAR_087185" description="In BRYLIB1; uncertain significance." evidence="67">
    <original>V</original>
    <variation>L</variation>
    <location>
        <position position="118"/>
    </location>
</feature>
<feature type="sequence variant" id="VAR_087186" description="In BRYLIB1; decreased protein abundance." evidence="67 70">
    <original>M</original>
    <variation>I</variation>
    <location>
        <position position="121"/>
    </location>
</feature>
<feature type="sequence variant" id="VAR_087187" description="In BRYLIB1." evidence="67">
    <original>M</original>
    <variation>K</variation>
    <location>
        <position position="121"/>
    </location>
</feature>
<feature type="sequence variant" id="VAR_087188" description="In BRYLIB2." evidence="67">
    <original>M</original>
    <variation>V</variation>
    <location>
        <position position="121"/>
    </location>
</feature>
<feature type="sequence variant" id="VAR_087189" description="In BRYLIB1." evidence="67 70">
    <original>P</original>
    <variation>L</variation>
    <location>
        <position position="122"/>
    </location>
</feature>
<feature type="sequence variant" id="VAR_087190" description="In BRYLIB1 and BRYLIB2." evidence="67">
    <original>P</original>
    <variation>R</variation>
    <location>
        <position position="122"/>
    </location>
</feature>
<feature type="sequence variant" id="VAR_087191" description="In BRYLIB1 and BRYLIB2." evidence="67">
    <original>Q</original>
    <variation>R</variation>
    <location>
        <position position="126"/>
    </location>
</feature>
<feature type="sequence variant" id="VAR_087192" description="In BRYLIB1; uncertain significance." evidence="67">
    <original>R</original>
    <variation>C</variation>
    <location>
        <position position="129"/>
    </location>
</feature>
<feature type="sequence variant" id="VAR_087193" description="In BRYLIB1; uncertain significance; decreased protein abundance; increased interaction with DAXX; not changed subcellular location." evidence="70">
    <original>R</original>
    <variation>H</variation>
    <location>
        <position position="129"/>
    </location>
</feature>
<feature type="mutagenesis site" description="Abolished serotonylation by TGM2." evidence="62">
    <original>Q</original>
    <variation>A</variation>
    <location>
        <position position="6"/>
    </location>
</feature>
<feature type="mutagenesis site" description="Reduced binding of histone H1 to histone H3.3-containing nucleosomes." evidence="50">
    <original>R</original>
    <variation>K</variation>
    <location>
        <position position="43"/>
    </location>
</feature>
<feature type="mutagenesis site" description="Loss of interaction with DNAJC9, but not with other histone chaperones, such as ASF1A, MCCM2, NASP or SPT2." evidence="68">
    <original>ED</original>
    <variation>AA</variation>
    <location>
        <begin position="106"/>
        <end position="107"/>
    </location>
</feature>
<feature type="sequence conflict" description="In Ref. 7; AAH81561." evidence="73" ref="7">
    <original>R</original>
    <variation>L</variation>
    <location>
        <position position="9"/>
    </location>
</feature>
<feature type="strand" evidence="84">
    <location>
        <begin position="4"/>
        <end position="6"/>
    </location>
</feature>
<feature type="helix" evidence="85">
    <location>
        <begin position="8"/>
        <end position="10"/>
    </location>
</feature>
<feature type="strand" evidence="90">
    <location>
        <begin position="11"/>
        <end position="15"/>
    </location>
</feature>
<feature type="strand" evidence="87">
    <location>
        <begin position="16"/>
        <end position="18"/>
    </location>
</feature>
<feature type="strand" evidence="88">
    <location>
        <begin position="35"/>
        <end position="37"/>
    </location>
</feature>
<feature type="strand" evidence="86">
    <location>
        <begin position="45"/>
        <end position="47"/>
    </location>
</feature>
<feature type="helix" evidence="86">
    <location>
        <begin position="49"/>
        <end position="59"/>
    </location>
</feature>
<feature type="helix" evidence="91">
    <location>
        <begin position="65"/>
        <end position="77"/>
    </location>
</feature>
<feature type="strand" evidence="89">
    <location>
        <begin position="80"/>
        <end position="82"/>
    </location>
</feature>
<feature type="strand" evidence="86">
    <location>
        <begin position="84"/>
        <end position="86"/>
    </location>
</feature>
<feature type="helix" evidence="91">
    <location>
        <begin position="87"/>
        <end position="114"/>
    </location>
</feature>
<feature type="strand" evidence="91">
    <location>
        <begin position="118"/>
        <end position="120"/>
    </location>
</feature>
<feature type="helix" evidence="91">
    <location>
        <begin position="122"/>
        <end position="131"/>
    </location>
</feature>
<reference key="1">
    <citation type="journal article" date="1985" name="Proc. Natl. Acad. Sci. U.S.A.">
        <title>Structure of a human histone cDNA: evidence that basally expressed histone genes have intervening sequences and encode polyadenylylated mRNAs.</title>
        <authorList>
            <person name="Wells D."/>
            <person name="Kedes L."/>
        </authorList>
    </citation>
    <scope>NUCLEOTIDE SEQUENCE [MRNA] (H3-3A)</scope>
    <source>
        <tissue>Fibroblast</tissue>
    </source>
</reference>
<reference key="2">
    <citation type="journal article" date="1987" name="Nucleic Acids Res.">
        <title>Unusual structure, evolutionary conservation of non-coding sequences and numerous pseudogenes characterize the human H3.3 histone multigene family.</title>
        <authorList>
            <person name="Wells D."/>
            <person name="Hoffman D."/>
            <person name="Kedes L."/>
        </authorList>
    </citation>
    <scope>NUCLEOTIDE SEQUENCE [MRNA] (H3-3A)</scope>
</reference>
<reference key="3">
    <citation type="journal article" date="1995" name="Genomics">
        <title>The human replacement histone H3.3B gene (H3F3B).</title>
        <authorList>
            <person name="Albig W."/>
            <person name="Bramlage B."/>
            <person name="Gruber K."/>
            <person name="Klobeck H.-G."/>
            <person name="Kunz J."/>
            <person name="Doenecke D."/>
        </authorList>
    </citation>
    <scope>NUCLEOTIDE SEQUENCE [GENOMIC DNA] (H3-3B)</scope>
    <source>
        <tissue>Testis</tissue>
    </source>
</reference>
<reference key="4">
    <citation type="journal article" date="2004" name="Proc. Natl. Acad. Sci. U.S.A.">
        <title>Large-scale cDNA transfection screening for genes related to cancer development and progression.</title>
        <authorList>
            <person name="Wan D."/>
            <person name="Gong Y."/>
            <person name="Qin W."/>
            <person name="Zhang P."/>
            <person name="Li J."/>
            <person name="Wei L."/>
            <person name="Zhou X."/>
            <person name="Li H."/>
            <person name="Qiu X."/>
            <person name="Zhong F."/>
            <person name="He L."/>
            <person name="Yu J."/>
            <person name="Yao G."/>
            <person name="Jiang H."/>
            <person name="Qian L."/>
            <person name="Yu Y."/>
            <person name="Shu H."/>
            <person name="Chen X."/>
            <person name="Xu H."/>
            <person name="Guo M."/>
            <person name="Pan Z."/>
            <person name="Chen Y."/>
            <person name="Ge C."/>
            <person name="Yang S."/>
            <person name="Gu J."/>
        </authorList>
    </citation>
    <scope>NUCLEOTIDE SEQUENCE [LARGE SCALE MRNA]</scope>
</reference>
<reference key="5">
    <citation type="journal article" date="2007" name="BMC Genomics">
        <title>The full-ORF clone resource of the German cDNA consortium.</title>
        <authorList>
            <person name="Bechtel S."/>
            <person name="Rosenfelder H."/>
            <person name="Duda A."/>
            <person name="Schmidt C.P."/>
            <person name="Ernst U."/>
            <person name="Wellenreuther R."/>
            <person name="Mehrle A."/>
            <person name="Schuster C."/>
            <person name="Bahr A."/>
            <person name="Bloecker H."/>
            <person name="Heubner D."/>
            <person name="Hoerlein A."/>
            <person name="Michel G."/>
            <person name="Wedler H."/>
            <person name="Koehrer K."/>
            <person name="Ottenwaelder B."/>
            <person name="Poustka A."/>
            <person name="Wiemann S."/>
            <person name="Schupp I."/>
        </authorList>
    </citation>
    <scope>NUCLEOTIDE SEQUENCE [LARGE SCALE MRNA] (H3-3B)</scope>
    <source>
        <tissue>Retina</tissue>
    </source>
</reference>
<reference key="6">
    <citation type="journal article" date="2006" name="Nature">
        <title>The DNA sequence and biological annotation of human chromosome 1.</title>
        <authorList>
            <person name="Gregory S.G."/>
            <person name="Barlow K.F."/>
            <person name="McLay K.E."/>
            <person name="Kaul R."/>
            <person name="Swarbreck D."/>
            <person name="Dunham A."/>
            <person name="Scott C.E."/>
            <person name="Howe K.L."/>
            <person name="Woodfine K."/>
            <person name="Spencer C.C.A."/>
            <person name="Jones M.C."/>
            <person name="Gillson C."/>
            <person name="Searle S."/>
            <person name="Zhou Y."/>
            <person name="Kokocinski F."/>
            <person name="McDonald L."/>
            <person name="Evans R."/>
            <person name="Phillips K."/>
            <person name="Atkinson A."/>
            <person name="Cooper R."/>
            <person name="Jones C."/>
            <person name="Hall R.E."/>
            <person name="Andrews T.D."/>
            <person name="Lloyd C."/>
            <person name="Ainscough R."/>
            <person name="Almeida J.P."/>
            <person name="Ambrose K.D."/>
            <person name="Anderson F."/>
            <person name="Andrew R.W."/>
            <person name="Ashwell R.I.S."/>
            <person name="Aubin K."/>
            <person name="Babbage A.K."/>
            <person name="Bagguley C.L."/>
            <person name="Bailey J."/>
            <person name="Beasley H."/>
            <person name="Bethel G."/>
            <person name="Bird C.P."/>
            <person name="Bray-Allen S."/>
            <person name="Brown J.Y."/>
            <person name="Brown A.J."/>
            <person name="Buckley D."/>
            <person name="Burton J."/>
            <person name="Bye J."/>
            <person name="Carder C."/>
            <person name="Chapman J.C."/>
            <person name="Clark S.Y."/>
            <person name="Clarke G."/>
            <person name="Clee C."/>
            <person name="Cobley V."/>
            <person name="Collier R.E."/>
            <person name="Corby N."/>
            <person name="Coville G.J."/>
            <person name="Davies J."/>
            <person name="Deadman R."/>
            <person name="Dunn M."/>
            <person name="Earthrowl M."/>
            <person name="Ellington A.G."/>
            <person name="Errington H."/>
            <person name="Frankish A."/>
            <person name="Frankland J."/>
            <person name="French L."/>
            <person name="Garner P."/>
            <person name="Garnett J."/>
            <person name="Gay L."/>
            <person name="Ghori M.R.J."/>
            <person name="Gibson R."/>
            <person name="Gilby L.M."/>
            <person name="Gillett W."/>
            <person name="Glithero R.J."/>
            <person name="Grafham D.V."/>
            <person name="Griffiths C."/>
            <person name="Griffiths-Jones S."/>
            <person name="Grocock R."/>
            <person name="Hammond S."/>
            <person name="Harrison E.S.I."/>
            <person name="Hart E."/>
            <person name="Haugen E."/>
            <person name="Heath P.D."/>
            <person name="Holmes S."/>
            <person name="Holt K."/>
            <person name="Howden P.J."/>
            <person name="Hunt A.R."/>
            <person name="Hunt S.E."/>
            <person name="Hunter G."/>
            <person name="Isherwood J."/>
            <person name="James R."/>
            <person name="Johnson C."/>
            <person name="Johnson D."/>
            <person name="Joy A."/>
            <person name="Kay M."/>
            <person name="Kershaw J.K."/>
            <person name="Kibukawa M."/>
            <person name="Kimberley A.M."/>
            <person name="King A."/>
            <person name="Knights A.J."/>
            <person name="Lad H."/>
            <person name="Laird G."/>
            <person name="Lawlor S."/>
            <person name="Leongamornlert D.A."/>
            <person name="Lloyd D.M."/>
            <person name="Loveland J."/>
            <person name="Lovell J."/>
            <person name="Lush M.J."/>
            <person name="Lyne R."/>
            <person name="Martin S."/>
            <person name="Mashreghi-Mohammadi M."/>
            <person name="Matthews L."/>
            <person name="Matthews N.S.W."/>
            <person name="McLaren S."/>
            <person name="Milne S."/>
            <person name="Mistry S."/>
            <person name="Moore M.J.F."/>
            <person name="Nickerson T."/>
            <person name="O'Dell C.N."/>
            <person name="Oliver K."/>
            <person name="Palmeiri A."/>
            <person name="Palmer S.A."/>
            <person name="Parker A."/>
            <person name="Patel D."/>
            <person name="Pearce A.V."/>
            <person name="Peck A.I."/>
            <person name="Pelan S."/>
            <person name="Phelps K."/>
            <person name="Phillimore B.J."/>
            <person name="Plumb R."/>
            <person name="Rajan J."/>
            <person name="Raymond C."/>
            <person name="Rouse G."/>
            <person name="Saenphimmachak C."/>
            <person name="Sehra H.K."/>
            <person name="Sheridan E."/>
            <person name="Shownkeen R."/>
            <person name="Sims S."/>
            <person name="Skuce C.D."/>
            <person name="Smith M."/>
            <person name="Steward C."/>
            <person name="Subramanian S."/>
            <person name="Sycamore N."/>
            <person name="Tracey A."/>
            <person name="Tromans A."/>
            <person name="Van Helmond Z."/>
            <person name="Wall M."/>
            <person name="Wallis J.M."/>
            <person name="White S."/>
            <person name="Whitehead S.L."/>
            <person name="Wilkinson J.E."/>
            <person name="Willey D.L."/>
            <person name="Williams H."/>
            <person name="Wilming L."/>
            <person name="Wray P.W."/>
            <person name="Wu Z."/>
            <person name="Coulson A."/>
            <person name="Vaudin M."/>
            <person name="Sulston J.E."/>
            <person name="Durbin R.M."/>
            <person name="Hubbard T."/>
            <person name="Wooster R."/>
            <person name="Dunham I."/>
            <person name="Carter N.P."/>
            <person name="McVean G."/>
            <person name="Ross M.T."/>
            <person name="Harrow J."/>
            <person name="Olson M.V."/>
            <person name="Beck S."/>
            <person name="Rogers J."/>
            <person name="Bentley D.R."/>
        </authorList>
    </citation>
    <scope>NUCLEOTIDE SEQUENCE [LARGE SCALE GENOMIC DNA]</scope>
</reference>
<reference key="7">
    <citation type="journal article" date="2004" name="Genome Res.">
        <title>The status, quality, and expansion of the NIH full-length cDNA project: the Mammalian Gene Collection (MGC).</title>
        <authorList>
            <consortium name="The MGC Project Team"/>
        </authorList>
    </citation>
    <scope>NUCLEOTIDE SEQUENCE [LARGE SCALE MRNA] (H3-3A AND H3-3B)</scope>
    <source>
        <tissue>Bone marrow</tissue>
        <tissue>Brain</tissue>
        <tissue>Colon</tissue>
        <tissue>Eye</tissue>
        <tissue>Lung</tissue>
        <tissue>Muscle</tissue>
        <tissue>Spinal cord</tissue>
        <tissue>Testis</tissue>
        <tissue>Uterus</tissue>
    </source>
</reference>
<reference key="8">
    <citation type="journal article" date="1981" name="J. Biochem.">
        <title>Human spleen histone H3. Isolation and amino acid sequence.</title>
        <authorList>
            <person name="Ohe Y."/>
            <person name="Iwai K."/>
        </authorList>
    </citation>
    <scope>PARTIAL PROTEIN SEQUENCE</scope>
    <scope>METHYLATION AT LYS-10; LYS-28 AND LYS-37</scope>
    <scope>ACETYLATION AT LYS-15 AND LYS-24</scope>
</reference>
<reference key="9">
    <citation type="journal article" date="2005" name="Biochemistry">
        <title>Modifications of human histone H3 variants during mitosis.</title>
        <authorList>
            <person name="Garcia B.A."/>
            <person name="Barber C.M."/>
            <person name="Hake S.B."/>
            <person name="Ptak C."/>
            <person name="Turner F.B."/>
            <person name="Busby S.A."/>
            <person name="Shabanowitz J."/>
            <person name="Moran R.G."/>
            <person name="Allis C.D."/>
            <person name="Hunt D.F."/>
        </authorList>
    </citation>
    <scope>PROTEIN SEQUENCE OF 28-41</scope>
    <scope>METHYLATION AT LYS-5; LYS-10; LYS-28 AND LYS-37</scope>
    <scope>PHOSPHORYLATION AT THR-4; SER-11; SER-29 AND SER-32</scope>
    <scope>ACETYLATION AT LYS-10 AND LYS-15</scope>
    <scope>IDENTIFICATION BY MASS SPECTROMETRY</scope>
</reference>
<reference key="10">
    <citation type="journal article" date="1999" name="J. Biol. Chem.">
        <title>Identification of a novel phosphorylation site on histone H3 coupled with mitotic chromosome condensation.</title>
        <authorList>
            <person name="Goto H."/>
            <person name="Tomono Y."/>
            <person name="Ajiro K."/>
            <person name="Kosako H."/>
            <person name="Fujita M."/>
            <person name="Sakurai M."/>
            <person name="Okawa K."/>
            <person name="Iwamatsu A."/>
            <person name="Okigaki T."/>
            <person name="Takahashi T."/>
            <person name="Inagaki M."/>
        </authorList>
    </citation>
    <scope>PROTEIN SEQUENCE OF 58-64; 117-120 AND 124-135</scope>
    <scope>PHOSPHORYLATION AT SER-11 AND SER-29</scope>
</reference>
<reference key="11">
    <citation type="journal article" date="2001" name="Nature">
        <title>Methylation of histone H3 lysine 9 creates a binding site for HP1 proteins.</title>
        <authorList>
            <person name="Lachner M."/>
            <person name="O'Carroll D."/>
            <person name="Rea S."/>
            <person name="Mechtler K."/>
            <person name="Jenuwein T."/>
        </authorList>
    </citation>
    <scope>METHYLATION AT LYS-10</scope>
</reference>
<reference key="12">
    <citation type="journal article" date="2002" name="Genes Cells">
        <title>Aurora-B phosphorylates Histone H3 at serine28 with regard to the mitotic chromosome condensation.</title>
        <authorList>
            <person name="Goto H."/>
            <person name="Yasui Y."/>
            <person name="Nigg E.A."/>
            <person name="Inagaki M."/>
        </authorList>
    </citation>
    <scope>PHOSPHORYLATION AT SER-11 AND SER-29</scope>
</reference>
<reference key="13">
    <citation type="journal article" date="2003" name="Nucleic Acids Res.">
        <title>Novel mitosis-specific phosphorylation of histone H3 at Thr11 mediated by Dlk/ZIP kinase.</title>
        <authorList>
            <person name="Preuss U."/>
            <person name="Landsberg G."/>
            <person name="Scheidtmann K.H."/>
        </authorList>
    </citation>
    <scope>PHOSPHORYLATION AT SER-11 AND THR-12</scope>
</reference>
<reference key="14">
    <citation type="journal article" date="2004" name="Cell">
        <title>Histone H3.1 and H3.3 complexes mediate nucleosome assembly pathways dependent or independent of DNA synthesis.</title>
        <authorList>
            <person name="Tagami H."/>
            <person name="Ray-Gallet D."/>
            <person name="Almouzni G."/>
            <person name="Nakatani Y."/>
        </authorList>
    </citation>
    <scope>FUNCTION</scope>
    <scope>INTERACTION WITH HIRA</scope>
</reference>
<reference key="15">
    <citation type="journal article" date="2004" name="J. Biol. Chem.">
        <title>Ligand-dependent activation of the farnesoid X-receptor directs arginine methylation of histone H3 by CARM1.</title>
        <authorList>
            <person name="Ananthanarayanan M."/>
            <person name="Li S."/>
            <person name="Balasubramaniyan N."/>
            <person name="Suchy F.J."/>
            <person name="Walsh M.J."/>
        </authorList>
    </citation>
    <scope>METHYLATION AT ARG-18</scope>
</reference>
<reference key="16">
    <citation type="journal article" date="2004" name="Nature">
        <title>Methylated lysine 79 of histone H3 targets 53BP1 to DNA double-strand breaks.</title>
        <authorList>
            <person name="Huyen Y."/>
            <person name="Zgheib O."/>
            <person name="Ditullio R.A. Jr."/>
            <person name="Gorgoulis V.G."/>
            <person name="Zacharatos P."/>
            <person name="Petty T.J."/>
            <person name="Sheston E.A."/>
            <person name="Mellert H.S."/>
            <person name="Stavridi E.S."/>
            <person name="Halazonetis T.D."/>
        </authorList>
    </citation>
    <scope>METHYLATION AT LYS-80</scope>
</reference>
<reference key="17">
    <citation type="journal article" date="2004" name="Science">
        <title>Human PAD4 regulates histone arginine methylation levels via demethylimination.</title>
        <authorList>
            <person name="Wang Y."/>
            <person name="Wysocka J."/>
            <person name="Sayegh J."/>
            <person name="Lee Y.-H."/>
            <person name="Perlin J.R."/>
            <person name="Leonelli L."/>
            <person name="Sonbuchner L.S."/>
            <person name="McDonald C.H."/>
            <person name="Cook R.G."/>
            <person name="Dou Y."/>
            <person name="Roeder R.G."/>
            <person name="Clarke S."/>
            <person name="Stallcup M.R."/>
            <person name="Allis C.D."/>
            <person name="Coonrod S.A."/>
        </authorList>
    </citation>
    <scope>CITRULLINATION AT ARG-9 AND ARG-18</scope>
    <scope>METHYLATION AT ARG-18</scope>
</reference>
<reference key="18">
    <citation type="journal article" date="2005" name="EMBO Rep.">
        <title>Variant histone H3.3 marks promoters of transcriptionally active genes during mammalian cell division.</title>
        <authorList>
            <person name="Chow C.-M."/>
            <person name="Georgiou A."/>
            <person name="Szutorisz H."/>
            <person name="Maia e Silva A."/>
            <person name="Pombo A."/>
            <person name="Barahona I."/>
            <person name="Dargelos E."/>
            <person name="Canzonetta C."/>
            <person name="Dillon N."/>
        </authorList>
    </citation>
    <scope>FUNCTION</scope>
</reference>
<reference key="19">
    <citation type="journal article" date="2005" name="Genes Dev.">
        <title>The kinase haspin is required for mitotic histone H3 Thr 3 phosphorylation and normal metaphase chromosome alignment.</title>
        <authorList>
            <person name="Dai J."/>
            <person name="Sultan S."/>
            <person name="Taylor S.S."/>
            <person name="Higgins J.M.G."/>
        </authorList>
    </citation>
    <scope>PHOSPHORYLATION AT THR-4; SER-11 AND SER-29</scope>
</reference>
<reference key="20">
    <citation type="journal article" date="2005" name="J. Biol. Chem.">
        <title>Phosphorylation of Ser28 in histone H3 mediated by mixed lineage kinase-like mitogen-activated protein triple kinase alpha.</title>
        <authorList>
            <person name="Choi H.S."/>
            <person name="Choi B.Y."/>
            <person name="Cho Y.-Y."/>
            <person name="Zhu F."/>
            <person name="Bode A.M."/>
            <person name="Dong Z."/>
        </authorList>
    </citation>
    <scope>PHOSPHORYLATION AT SER-29</scope>
</reference>
<reference key="21">
    <citation type="journal article" date="2005" name="Proc. Natl. Acad. Sci. U.S.A.">
        <title>Serine 31 phosphorylation of histone variant H3.3 is specific to regions bordering centromeres in metaphase chromosomes.</title>
        <authorList>
            <person name="Hake S.B."/>
            <person name="Garcia B.A."/>
            <person name="Kauer M."/>
            <person name="Baker S.P."/>
            <person name="Shabanowitz J."/>
            <person name="Hunt D.F."/>
            <person name="Allis C.D."/>
        </authorList>
    </citation>
    <scope>PHOSPHORYLATION AT SER-11; SER-29 AND SER-32</scope>
    <scope>IDENTIFICATION BY MASS SPECTROMETRY</scope>
</reference>
<reference key="22">
    <citation type="journal article" date="2006" name="EMBO Rep.">
        <title>Histone H3.3 deposition at E2F-regulated genes is linked to transcription.</title>
        <authorList>
            <person name="Daury L."/>
            <person name="Chailleux C."/>
            <person name="Bonvallet J."/>
            <person name="Trouche D."/>
        </authorList>
    </citation>
    <scope>FUNCTION</scope>
</reference>
<reference key="23">
    <citation type="journal article" date="2006" name="J. Biol. Chem.">
        <title>Expression patterns and post-translational modifications associated with mammalian histone H3 variants.</title>
        <authorList>
            <person name="Hake S.B."/>
            <person name="Garcia B.A."/>
            <person name="Duncan E.M."/>
            <person name="Kauer M."/>
            <person name="Dellaire G."/>
            <person name="Shabanowitz J."/>
            <person name="Bazett-Jones D.P."/>
            <person name="Allis C.D."/>
            <person name="Hunt D.F."/>
        </authorList>
    </citation>
    <scope>ACETYLATION AT LYS-10; LYS-15; LYS-19; LYS-24 AND LYS-28</scope>
    <scope>METHYLATION AT LYS-5; LYS-10; LYS-19; LYS-28; LYS-37; LYS-65; LYS-80 AND LYS-123</scope>
    <scope>IDENTIFICATION BY MASS SPECTROMETRY</scope>
</reference>
<reference key="24">
    <citation type="journal article" date="2006" name="J. Proteome Res.">
        <title>Mass spectrometric characterization of human histone H3: a bird's eye view.</title>
        <authorList>
            <person name="Thomas C.E."/>
            <person name="Kelleher N.L."/>
            <person name="Mizzen C.A."/>
        </authorList>
    </citation>
    <scope>METHYLATION AT LYS-5 AND LYS-10</scope>
    <scope>ACETYLATION AT LYS-10</scope>
    <scope>IDENTIFICATION BY MASS SPECTROMETRY</scope>
</reference>
<reference key="25">
    <citation type="journal article" date="2006" name="Mol. Endocrinol.">
        <title>Coactivator-associated arginine methyltransferase-1 enhances nuclear factor-kappaB-mediated gene transcription through methylation of histone H3 at arginine 17.</title>
        <authorList>
            <person name="Miao F."/>
            <person name="Li S."/>
            <person name="Chavez V."/>
            <person name="Lanting L."/>
            <person name="Natarajan R."/>
        </authorList>
    </citation>
    <scope>ACETYLATION AT LYS-10 AND LYS-15</scope>
    <scope>METHYLATION AT ARG-18</scope>
    <scope>CITRULLINATION AT ARG-18</scope>
</reference>
<reference key="26">
    <citation type="journal article" date="2007" name="Genes Dev.">
        <title>PRMT6-mediated methylation of R2 in histone H3 antagonizes H3 K4 trimethylation.</title>
        <authorList>
            <person name="Hyllus D."/>
            <person name="Stein C."/>
            <person name="Schnabel K."/>
            <person name="Schiltz E."/>
            <person name="Imhof A."/>
            <person name="Dou Y."/>
            <person name="Hsieh J."/>
            <person name="Bauer U.M."/>
        </authorList>
    </citation>
    <scope>METHYLATION AT ARG-3 BY PRMT6</scope>
</reference>
<reference key="27">
    <citation type="journal article" date="2006" name="Proc. Natl. Acad. Sci. U.S.A.">
        <title>Structural basis for histone N-terminal recognition by human peptidylarginine deiminase 4.</title>
        <authorList>
            <person name="Arita K."/>
            <person name="Shimizu T."/>
            <person name="Hashimoto H."/>
            <person name="Hidaka Y."/>
            <person name="Yamada M."/>
            <person name="Sato M."/>
        </authorList>
    </citation>
    <scope>CITRULLINATION AT ARG-3; ARG-9; ARG-18 AND ARG-27</scope>
</reference>
<reference key="28">
    <citation type="journal article" date="2007" name="J. Biol. Chem.">
        <title>Organismal differences in post-translational modifications in histones H3 and H4.</title>
        <authorList>
            <person name="Garcia B.A."/>
            <person name="Hake S.B."/>
            <person name="Diaz R.L."/>
            <person name="Kauer M."/>
            <person name="Morris S.A."/>
            <person name="Recht J."/>
            <person name="Shabanowitz J."/>
            <person name="Mishra N."/>
            <person name="Strahl B.D."/>
            <person name="Allis C.D."/>
            <person name="Hunt D.F."/>
        </authorList>
    </citation>
    <scope>ACETYLATION AT LYS-5; LYS-10; LYS-15; LYS-19; LYS-24; LYS-28; LYS-37; LYS-57 AND LYS-80</scope>
    <scope>METHYLATION AT LYS-5; LYS-10; LYS-19; LYS-24; LYS-28; LYS-37; LYS-57; LYS-65; LYS-80 AND LYS-123</scope>
    <scope>IDENTIFICATION BY MASS SPECTROMETRY</scope>
</reference>
<reference key="29">
    <citation type="journal article" date="2007" name="J. Biol. Chem.">
        <title>Identification of histone H3 lysine 36 acetylation as a highly conserved histone modification.</title>
        <authorList>
            <person name="Morris S.A."/>
            <person name="Rao B."/>
            <person name="Garcia B.A."/>
            <person name="Hake S.B."/>
            <person name="Diaz R.L."/>
            <person name="Shabanowitz J."/>
            <person name="Hunt D.F."/>
            <person name="Allis C.D."/>
            <person name="Lieb J.D."/>
            <person name="Strahl B.D."/>
        </authorList>
    </citation>
    <scope>ACETYLATION AT LYS-37</scope>
</reference>
<reference key="30">
    <citation type="journal article" date="2007" name="Nature">
        <title>Methylation of histone H3R2 by PRMT6 and H3K4 by an MLL complex are mutually exclusive.</title>
        <authorList>
            <person name="Guccione E."/>
            <person name="Bassi C."/>
            <person name="Casadio F."/>
            <person name="Martinato F."/>
            <person name="Cesaroni M."/>
            <person name="Schuchlautz H."/>
            <person name="Luescher B."/>
            <person name="Amati B."/>
        </authorList>
    </citation>
    <scope>METHYLATION AT ARG-3 BY PRMT6</scope>
</reference>
<reference key="31">
    <citation type="journal article" date="2008" name="J. Biol. Chem.">
        <title>Arginine methylation of the histone H3 tail impedes effector binding.</title>
        <authorList>
            <person name="Iberg A.N."/>
            <person name="Espejo A."/>
            <person name="Cheng D."/>
            <person name="Kim D."/>
            <person name="Michaud-Levesque J."/>
            <person name="Richard S."/>
            <person name="Bedford M.T."/>
        </authorList>
    </citation>
    <scope>METHYLATION AT ARG-3 BY PRMT6</scope>
</reference>
<reference key="32">
    <citation type="journal article" date="2008" name="Nat. Cell Biol.">
        <title>Phosphorylation of histone H3 at threonine 11 establishes a novel chromatin mark for transcriptional regulation.</title>
        <authorList>
            <person name="Metzger E."/>
            <person name="Yin N."/>
            <person name="Wissmann M."/>
            <person name="Kunowska N."/>
            <person name="Fischer K."/>
            <person name="Friedrichs N."/>
            <person name="Patnaik D."/>
            <person name="Higgins J.M."/>
            <person name="Potier N."/>
            <person name="Scheidtmann K.H."/>
            <person name="Buettner R."/>
            <person name="Schule R."/>
        </authorList>
    </citation>
    <scope>PHOSPHORYLATION AT THR-12</scope>
</reference>
<reference key="33">
    <citation type="journal article" date="2009" name="J. Biol. Chem.">
        <title>Acetylation of histone H3 at the nucleosome dyad alters DNA-histone binding.</title>
        <authorList>
            <person name="Manohar M."/>
            <person name="Mooney A.M."/>
            <person name="North J.A."/>
            <person name="Nakkula R.J."/>
            <person name="Picking J.W."/>
            <person name="Edon A."/>
            <person name="Fishel R."/>
            <person name="Poirier M.G."/>
            <person name="Ottesen J.J."/>
        </authorList>
    </citation>
    <scope>ACETYLATION AT LYS-116 AND LYS-123</scope>
</reference>
<reference key="34">
    <citation type="journal article" date="2009" name="Nature">
        <title>JAK2 phosphorylates histone H3Y41 and excludes HP1alpha from chromatin.</title>
        <authorList>
            <person name="Dawson M.A."/>
            <person name="Bannister A.J."/>
            <person name="Gottgens B."/>
            <person name="Foster S.D."/>
            <person name="Bartke T."/>
            <person name="Green A.R."/>
            <person name="Kouzarides T."/>
        </authorList>
    </citation>
    <scope>PHOSPHORYLATION AT TYR-42</scope>
</reference>
<reference key="35">
    <citation type="journal article" date="2009" name="Sci. Signal.">
        <title>Quantitative phosphoproteomic analysis of T cell receptor signaling reveals system-wide modulation of protein-protein interactions.</title>
        <authorList>
            <person name="Mayya V."/>
            <person name="Lundgren D.H."/>
            <person name="Hwang S.-I."/>
            <person name="Rezaul K."/>
            <person name="Wu L."/>
            <person name="Eng J.K."/>
            <person name="Rodionov V."/>
            <person name="Han D.K."/>
        </authorList>
    </citation>
    <scope>IDENTIFICATION BY MASS SPECTROMETRY [LARGE SCALE ANALYSIS]</scope>
    <source>
        <tissue>Leukemic T-cell</tissue>
    </source>
</reference>
<reference key="36">
    <citation type="journal article" date="2009" name="Science">
        <title>Lysine acetylation targets protein complexes and co-regulates major cellular functions.</title>
        <authorList>
            <person name="Choudhary C."/>
            <person name="Kumar C."/>
            <person name="Gnad F."/>
            <person name="Nielsen M.L."/>
            <person name="Rehman M."/>
            <person name="Walther T.C."/>
            <person name="Olsen J.V."/>
            <person name="Mann M."/>
        </authorList>
    </citation>
    <scope>ACETYLATION [LARGE SCALE ANALYSIS] AT LYS-28</scope>
    <scope>IDENTIFICATION BY MASS SPECTROMETRY [LARGE SCALE ANALYSIS]</scope>
</reference>
<reference key="37">
    <citation type="journal article" date="2010" name="Cell">
        <title>Quantitative interaction proteomics and genome-wide profiling of epigenetic histone marks and their readers.</title>
        <authorList>
            <person name="Vermeulen M."/>
            <person name="Eberl H.C."/>
            <person name="Matarese F."/>
            <person name="Marks H."/>
            <person name="Denissov S."/>
            <person name="Butter F."/>
            <person name="Lee K.K."/>
            <person name="Olsen J.V."/>
            <person name="Hyman A.A."/>
            <person name="Stunnenberg H.G."/>
            <person name="Mann M."/>
        </authorList>
    </citation>
    <scope>PHOSPHORYLATION AT SER-58 AND THR-81</scope>
</reference>
<reference key="38">
    <citation type="journal article" date="2010" name="Genes Dev.">
        <title>The death-associated protein DAXX is a novel histone chaperone involved in the replication-independent deposition of H3.3.</title>
        <authorList>
            <person name="Drane P."/>
            <person name="Ouararhni K."/>
            <person name="Depaux A."/>
            <person name="Shuaib M."/>
            <person name="Hamiche A."/>
        </authorList>
    </citation>
    <scope>INTERACTION WITH DAXX</scope>
</reference>
<reference key="39">
    <citation type="journal article" date="2010" name="Nature">
        <title>Phosphorylation of histone H3T6 by PKCbeta(I) controls demethylation at histone H3K4.</title>
        <authorList>
            <person name="Metzger E."/>
            <person name="Imhof A."/>
            <person name="Patel D."/>
            <person name="Kahl P."/>
            <person name="Hoffmeyer K."/>
            <person name="Friedrichs N."/>
            <person name="Muller J.M."/>
            <person name="Greschik H."/>
            <person name="Kirfel J."/>
            <person name="Ji S."/>
            <person name="Kunowska N."/>
            <person name="Beisenherz-Huss C."/>
            <person name="Gunther T."/>
            <person name="Buettner R."/>
            <person name="Schule R."/>
        </authorList>
    </citation>
    <scope>PHOSPHORYLATION AT THR-7</scope>
</reference>
<reference key="40">
    <citation type="journal article" date="2011" name="Cell">
        <title>Identification of 67 histone marks and histone lysine crotonylation as a new type of histone modification.</title>
        <authorList>
            <person name="Tan M."/>
            <person name="Luo H."/>
            <person name="Lee S."/>
            <person name="Jin F."/>
            <person name="Yang J.S."/>
            <person name="Montellier E."/>
            <person name="Buchou T."/>
            <person name="Cheng Z."/>
            <person name="Rousseaux S."/>
            <person name="Rajagopal N."/>
            <person name="Lu Z."/>
            <person name="Ye Z."/>
            <person name="Zhu Q."/>
            <person name="Wysocka J."/>
            <person name="Ye Y."/>
            <person name="Khochbin S."/>
            <person name="Ren B."/>
            <person name="Zhao Y."/>
        </authorList>
    </citation>
    <scope>CROTONYLATION AT LYS-5; LYS-10; LYS-19; LYS-24; LYS-28 AND LYS-57</scope>
</reference>
<reference key="41">
    <citation type="journal article" date="2011" name="Mol. Cell">
        <title>A specific function for the histone chaperone NASP to fine-tune a reservoir of soluble H3-H4 in the histone supply chain.</title>
        <authorList>
            <person name="Cook A.J."/>
            <person name="Gurard-Levin Z.A."/>
            <person name="Vassias I."/>
            <person name="Almouzni G."/>
        </authorList>
    </citation>
    <scope>INTERACTION WITH NASP</scope>
</reference>
<reference key="42">
    <citation type="journal article" date="2012" name="Cell">
        <title>PKM2 phosphorylates histone H3 and promotes gene transcription and tumorigenesis.</title>
        <authorList>
            <person name="Yang W."/>
            <person name="Xia Y."/>
            <person name="Hawke D."/>
            <person name="Li X."/>
            <person name="Liang J."/>
            <person name="Xing D."/>
            <person name="Aldape K."/>
            <person name="Hunter T."/>
            <person name="Alfred Yung W.K."/>
            <person name="Lu Z."/>
        </authorList>
    </citation>
    <scope>PHOSPHORYLATION AT THR-12</scope>
</reference>
<reference key="43">
    <citation type="journal article" date="2012" name="Mol. Cell">
        <title>Histone H3 lysine 56 methylation regulates DNA replication through its interaction with PCNA.</title>
        <authorList>
            <person name="Yu Y."/>
            <person name="Song C."/>
            <person name="Zhang Q."/>
            <person name="Dimaggio P.A."/>
            <person name="Garcia B.A."/>
            <person name="York A."/>
            <person name="Carey M.F."/>
            <person name="Grunstein M."/>
        </authorList>
    </citation>
    <scope>METHYLATION AT LYS-57</scope>
</reference>
<reference key="44">
    <citation type="journal article" date="2012" name="Mol. Cell">
        <title>Lysyl oxidase-like 2 deaminates lysine 4 in histone H3.</title>
        <authorList>
            <person name="Herranz N."/>
            <person name="Dave N."/>
            <person name="Millanes-Romero A."/>
            <person name="Morey L."/>
            <person name="Diaz V.M."/>
            <person name="Lorenz-Fonfria V."/>
            <person name="Gutierrez-Gallego R."/>
            <person name="Jeronimo C."/>
            <person name="Di Croce L."/>
            <person name="Garcia de Herreros A."/>
            <person name="Peiro S."/>
        </authorList>
    </citation>
    <scope>RETRACTED PAPER</scope>
</reference>
<reference key="45">
    <citation type="journal article" date="2016" name="Mol. Cell">
        <authorList>
            <person name="Herranz N."/>
            <person name="Dave N."/>
            <person name="Millanes-Romero A."/>
            <person name="Morey L."/>
            <person name="Diaz V.M."/>
            <person name="Lorenz-Fonfria V."/>
            <person name="Gutierrez-Gallego R."/>
            <person name="Jeronimo C."/>
            <person name="Di Croce L."/>
            <person name="Garcia de Herreros A."/>
            <person name="Peiro S."/>
        </authorList>
    </citation>
    <scope>RETRACTION NOTICE OF PUBMED:22483618</scope>
</reference>
<reference key="46">
    <citation type="journal article" date="2014" name="J. Proteomics">
        <title>An enzyme assisted RP-RPLC approach for in-depth analysis of human liver phosphoproteome.</title>
        <authorList>
            <person name="Bian Y."/>
            <person name="Song C."/>
            <person name="Cheng K."/>
            <person name="Dong M."/>
            <person name="Wang F."/>
            <person name="Huang J."/>
            <person name="Sun D."/>
            <person name="Wang L."/>
            <person name="Ye M."/>
            <person name="Zou H."/>
        </authorList>
    </citation>
    <scope>PHOSPHORYLATION [LARGE SCALE ANALYSIS] AT SER-87</scope>
    <scope>IDENTIFICATION BY MASS SPECTROMETRY [LARGE SCALE ANALYSIS]</scope>
    <source>
        <tissue>Liver</tissue>
    </source>
</reference>
<reference key="47">
    <citation type="journal article" date="2014" name="Mol. Cell. Proteomics">
        <title>Immunoaffinity enrichment and mass spectrometry analysis of protein methylation.</title>
        <authorList>
            <person name="Guo A."/>
            <person name="Gu H."/>
            <person name="Zhou J."/>
            <person name="Mulhern D."/>
            <person name="Wang Y."/>
            <person name="Lee K.A."/>
            <person name="Yang V."/>
            <person name="Aguiar M."/>
            <person name="Kornhauser J."/>
            <person name="Jia X."/>
            <person name="Ren J."/>
            <person name="Beausoleil S.A."/>
            <person name="Silva J.C."/>
            <person name="Vemulapalli V."/>
            <person name="Bedford M.T."/>
            <person name="Comb M.J."/>
        </authorList>
    </citation>
    <scope>METHYLATION [LARGE SCALE ANALYSIS] AT LYS-28</scope>
    <scope>IDENTIFICATION BY MASS SPECTROMETRY [LARGE SCALE ANALYSIS]</scope>
    <source>
        <tissue>Colon carcinoma</tissue>
    </source>
</reference>
<reference key="48">
    <citation type="journal article" date="2015" name="Proteomics">
        <title>N-terminome analysis of the human mitochondrial proteome.</title>
        <authorList>
            <person name="Vaca Jacome A.S."/>
            <person name="Rabilloud T."/>
            <person name="Schaeffer-Reiss C."/>
            <person name="Rompais M."/>
            <person name="Ayoub D."/>
            <person name="Lane L."/>
            <person name="Bairoch A."/>
            <person name="Van Dorsselaer A."/>
            <person name="Carapito C."/>
        </authorList>
    </citation>
    <scope>IDENTIFICATION BY MASS SPECTROMETRY [LARGE SCALE ANALYSIS]</scope>
</reference>
<reference key="49">
    <citation type="journal article" date="2012" name="Mol. Cell. Proteomics">
        <title>Lysine succinylation and lysine malonylation in histones.</title>
        <authorList>
            <person name="Xie Z."/>
            <person name="Dai J."/>
            <person name="Dai L."/>
            <person name="Tan M."/>
            <person name="Cheng Z."/>
            <person name="Wu Y."/>
            <person name="Boeke J.D."/>
            <person name="Zhao Y."/>
        </authorList>
    </citation>
    <scope>SUCCINYLATION AT LYS-15; LYS-57; LYS-80 AND LYS-123</scope>
</reference>
<reference key="50">
    <citation type="journal article" date="2013" name="Cell">
        <title>Regulation of transcription through acetylation of H3K122 on the lateral surface of the histone octamer.</title>
        <authorList>
            <person name="Tropberger P."/>
            <person name="Pott S."/>
            <person name="Keller C."/>
            <person name="Kamieniarz-Gdula K."/>
            <person name="Caron M."/>
            <person name="Richter F."/>
            <person name="Li G."/>
            <person name="Mittler G."/>
            <person name="Liu E.T."/>
            <person name="Buhler M."/>
            <person name="Margueron R."/>
            <person name="Schneider R."/>
        </authorList>
    </citation>
    <scope>ACETYLATION AT LYS-123</scope>
</reference>
<reference key="51">
    <citation type="journal article" date="2014" name="Nat. Chem. Biol.">
        <title>Lysine 2-hydroxyisobutyrylation is a widely distributed active histone mark.</title>
        <authorList>
            <person name="Dai L."/>
            <person name="Peng C."/>
            <person name="Montellier E."/>
            <person name="Lu Z."/>
            <person name="Chen Y."/>
            <person name="Ishii H."/>
            <person name="Debernardi A."/>
            <person name="Buchou T."/>
            <person name="Rousseaux S."/>
            <person name="Jin F."/>
            <person name="Sabari B.R."/>
            <person name="Deng Z."/>
            <person name="Allis C.D."/>
            <person name="Ren B."/>
            <person name="Khochbin S."/>
            <person name="Zhao Y."/>
        </authorList>
    </citation>
    <scope>HYDROXYBUTYRYLATION AT LYS-5; LYS-10; LYS-15; LYS-19; LYS-24; LYS-28; LYS-37; LYS-57; LYS-65; LYS-80 AND LYS-123</scope>
</reference>
<reference key="52">
    <citation type="journal article" date="2016" name="FEBS J.">
        <title>Lysyl oxidase-like 2 (LOXL2) oxidizes trimethylated lysine 4 in histone H3.</title>
        <authorList>
            <person name="Herranz N."/>
            <person name="Dave N."/>
            <person name="Millanes-Romero A."/>
            <person name="Pascual-Reguant L."/>
            <person name="Morey L."/>
            <person name="Diaz V.M."/>
            <person name="Lorenz-Fonfria V."/>
            <person name="Gutierrez-Gallego R."/>
            <person name="Jeronimo C."/>
            <person name="Iturbide A."/>
            <person name="Di Croce L."/>
            <person name="Garcia de Herreros A."/>
            <person name="Peiro S."/>
        </authorList>
    </citation>
    <scope>ALLYSINE AT LYS-5</scope>
</reference>
<reference key="53">
    <citation type="journal article" date="2016" name="Mol. Cell">
        <title>Dynamic competing histone H4 K5K8 acetylation and butyrylation are hallmarks of highly active gene promoters.</title>
        <authorList>
            <person name="Goudarzi A."/>
            <person name="Zhang D."/>
            <person name="Huang H."/>
            <person name="Barral S."/>
            <person name="Kwon O.K."/>
            <person name="Qi S."/>
            <person name="Tang Z."/>
            <person name="Buchou T."/>
            <person name="Vitte A.L."/>
            <person name="He T."/>
            <person name="Cheng Z."/>
            <person name="Montellier E."/>
            <person name="Gaucher J."/>
            <person name="Curtet S."/>
            <person name="Debernardi A."/>
            <person name="Charbonnier G."/>
            <person name="Puthier D."/>
            <person name="Petosa C."/>
            <person name="Panne D."/>
            <person name="Rousseaux S."/>
            <person name="Roeder R.G."/>
            <person name="Zhao Y."/>
            <person name="Khochbin S."/>
        </authorList>
    </citation>
    <scope>BUTYRYLATION AT LYS-10; LYS-19 AND LYS-24</scope>
</reference>
<reference key="54">
    <citation type="journal article" date="2016" name="Mol. Cell">
        <title>Metabolic regulation of gene expression by histone lysine beta-hydroxybutyrylation.</title>
        <authorList>
            <person name="Xie Z."/>
            <person name="Zhang D."/>
            <person name="Chung D."/>
            <person name="Tang Z."/>
            <person name="Huang H."/>
            <person name="Dai L."/>
            <person name="Qi S."/>
            <person name="Li J."/>
            <person name="Colak G."/>
            <person name="Chen Y."/>
            <person name="Xia C."/>
            <person name="Peng C."/>
            <person name="Ruan H."/>
            <person name="Kirkey M."/>
            <person name="Wang D."/>
            <person name="Jensen L.M."/>
            <person name="Kwon O.K."/>
            <person name="Lee S."/>
            <person name="Pletcher S.D."/>
            <person name="Tan M."/>
            <person name="Lombard D.B."/>
            <person name="White K.P."/>
            <person name="Zhao H."/>
            <person name="Li J."/>
            <person name="Roeder R.G."/>
            <person name="Yang X."/>
            <person name="Zhao Y."/>
        </authorList>
    </citation>
    <scope>HYDROXYBUTYRYLATION AT LYS-5; LYS-10; LYS-15; LYS-19; LYS-24; LYS-28; LYS-57; LYS-80 AND LYS-123</scope>
</reference>
<reference key="55">
    <citation type="journal article" date="2016" name="Nat. Commun.">
        <title>SIRT7 is a histone desuccinylase that functionally links to chromatin compaction and genome stability.</title>
        <authorList>
            <person name="Li L."/>
            <person name="Shi L."/>
            <person name="Yang S."/>
            <person name="Yan R."/>
            <person name="Zhang D."/>
            <person name="Yang J."/>
            <person name="He L."/>
            <person name="Li W."/>
            <person name="Yi X."/>
            <person name="Sun L."/>
            <person name="Liang J."/>
            <person name="Cheng Z."/>
            <person name="Shi L."/>
            <person name="Shang Y."/>
            <person name="Yu W."/>
        </authorList>
    </citation>
    <scope>SUCCINYLATION AT LYS-123</scope>
    <scope>DESUSUCCINYLATION</scope>
</reference>
<reference key="56">
    <citation type="journal article" date="2016" name="Nucleic Acids Res.">
        <title>Structure and function of human histone H3.Y nucleosome.</title>
        <authorList>
            <person name="Kujirai T."/>
            <person name="Horikoshi N."/>
            <person name="Sato K."/>
            <person name="Maehara K."/>
            <person name="Machida S."/>
            <person name="Osakabe A."/>
            <person name="Kimura H."/>
            <person name="Ohkawa Y."/>
            <person name="Kurumizaka H."/>
        </authorList>
    </citation>
    <scope>MUTAGENESIS OF ARG-43</scope>
</reference>
<reference key="57">
    <citation type="journal article" date="2017" name="Cell Res.">
        <title>Class I histone deacetylases are major histone decrotonylases: evidence for critical and broad function of histone crotonylation in transcription.</title>
        <authorList>
            <person name="Wei W."/>
            <person name="Liu X."/>
            <person name="Chen J."/>
            <person name="Gao S."/>
            <person name="Lu L."/>
            <person name="Zhang H."/>
            <person name="Ding G."/>
            <person name="Wang Z."/>
            <person name="Chen Z."/>
            <person name="Shi T."/>
            <person name="Li J."/>
            <person name="Yu J."/>
            <person name="Wong J."/>
        </authorList>
    </citation>
    <scope>CROTONYLATION AT LYS-5; LYS-10 AND LYS-24</scope>
</reference>
<reference key="58">
    <citation type="journal article" date="2017" name="Mol. Cell">
        <title>Serine ADP-ribosylation depends on HPF1.</title>
        <authorList>
            <person name="Bonfiglio J.J."/>
            <person name="Fontana P."/>
            <person name="Zhang Q."/>
            <person name="Colby T."/>
            <person name="Gibbs-Seymour I."/>
            <person name="Atanassov I."/>
            <person name="Bartlett E."/>
            <person name="Zaja R."/>
            <person name="Ahel I."/>
            <person name="Matic I."/>
        </authorList>
    </citation>
    <scope>ADP-RIBOSYLATION AT SER-11 AND SER-29</scope>
</reference>
<reference key="59">
    <citation type="journal article" date="2017" name="Nature">
        <title>KAT2A coupled with the alpha-KGDH complex acts as a histone H3 succinyltransferase.</title>
        <authorList>
            <person name="Wang Y."/>
            <person name="Guo Y.R."/>
            <person name="Liu K."/>
            <person name="Yin Z."/>
            <person name="Liu R."/>
            <person name="Xia Y."/>
            <person name="Tan L."/>
            <person name="Yang P."/>
            <person name="Lee J.H."/>
            <person name="Li X.J."/>
            <person name="Hawke D."/>
            <person name="Zheng Y."/>
            <person name="Qian X."/>
            <person name="Lyu J."/>
            <person name="He J."/>
            <person name="Xing D."/>
            <person name="Tao Y.J."/>
            <person name="Lu Z."/>
        </authorList>
    </citation>
    <scope>SUCCINYLATION AT LYS-80</scope>
</reference>
<reference key="60">
    <citation type="journal article" date="2018" name="Cell Rep.">
        <title>Interplay of histone marks with serine ADP-ribosylation.</title>
        <authorList>
            <person name="Bartlett E."/>
            <person name="Bonfiglio J.J."/>
            <person name="Prokhorova E."/>
            <person name="Colby T."/>
            <person name="Zobel F."/>
            <person name="Ahel I."/>
            <person name="Matic I."/>
        </authorList>
    </citation>
    <scope>ADP-RIBOSYLATION AT SER-11</scope>
</reference>
<reference key="61">
    <citation type="journal article" date="2018" name="Elife">
        <title>Serine is the major residue for ADP-ribosylation upon DNA damage.</title>
        <authorList>
            <person name="Palazzo L."/>
            <person name="Leidecker O."/>
            <person name="Prokhorova E."/>
            <person name="Dauben H."/>
            <person name="Matic I."/>
            <person name="Ahel I."/>
        </authorList>
    </citation>
    <scope>ADP-RIBOSYLATION AT SER-11 AND SER-29</scope>
</reference>
<reference key="62">
    <citation type="journal article" date="2019" name="Mol. Cell">
        <title>Glutarylation of histone H4 lysine 91 regulates chromatin dynamics.</title>
        <authorList>
            <person name="Bao X."/>
            <person name="Liu Z."/>
            <person name="Zhang W."/>
            <person name="Gladysz K."/>
            <person name="Fung Y.M.E."/>
            <person name="Tian G."/>
            <person name="Xiong Y."/>
            <person name="Wong J.W.H."/>
            <person name="Yuen K.W.Y."/>
            <person name="Li X.D."/>
        </authorList>
    </citation>
    <scope>GLUTARYLATION AT LYS-15; LYS-19; LYS-24; LYS-28; LYS-57; LYS-80; LYS-116 AND LYS-123</scope>
</reference>
<reference key="63">
    <citation type="journal article" date="2019" name="Nature">
        <title>Histone serotonylation is a permissive modification that enhances TFIID binding to H3K4me3.</title>
        <authorList>
            <person name="Farrelly L.A."/>
            <person name="Thompson R.E."/>
            <person name="Zhao S."/>
            <person name="Lepack A.E."/>
            <person name="Lyu Y."/>
            <person name="Bhanu N.V."/>
            <person name="Zhang B."/>
            <person name="Loh Y.E."/>
            <person name="Ramakrishnan A."/>
            <person name="Vadodaria K.C."/>
            <person name="Heard K.J."/>
            <person name="Erikson G."/>
            <person name="Nakadai T."/>
            <person name="Bastle R.M."/>
            <person name="Lukasak B.J."/>
            <person name="Zebroski H. III"/>
            <person name="Alenina N."/>
            <person name="Bader M."/>
            <person name="Berton O."/>
            <person name="Roeder R.G."/>
            <person name="Molina H."/>
            <person name="Gage F.H."/>
            <person name="Shen L."/>
            <person name="Garcia B.A."/>
            <person name="Li H."/>
            <person name="Muir T.W."/>
            <person name="Maze I."/>
        </authorList>
    </citation>
    <scope>SEROTONYLATION AT GLN-6</scope>
    <scope>MUTAGENESIS OF GLN-6</scope>
</reference>
<reference key="64">
    <citation type="journal article" date="2019" name="Nature">
        <title>Metabolic regulation of gene expression by histone lactylation.</title>
        <authorList>
            <person name="Zhang D."/>
            <person name="Tang Z."/>
            <person name="Huang H."/>
            <person name="Zhou G."/>
            <person name="Cui C."/>
            <person name="Weng Y."/>
            <person name="Liu W."/>
            <person name="Kim S."/>
            <person name="Lee S."/>
            <person name="Perez-Neut M."/>
            <person name="Ding J."/>
            <person name="Czyz D."/>
            <person name="Hu R."/>
            <person name="Ye Z."/>
            <person name="He M."/>
            <person name="Zheng Y.G."/>
            <person name="Shuman H.A."/>
            <person name="Dai L."/>
            <person name="Ren B."/>
            <person name="Roeder R.G."/>
            <person name="Becker L."/>
            <person name="Zhao Y."/>
        </authorList>
    </citation>
    <scope>LACTYLATION AT LYS-9; LYS-19; LYS-24; LYS-28 AND LYS-80</scope>
</reference>
<reference key="65">
    <citation type="journal article" date="2019" name="Sci. Rep.">
        <title>VRK1 functional insufficiency due to alterations in protein stability or kinase activity of human VRK1 pathogenic variants implicated in neuromotor syndromes.</title>
        <authorList>
            <person name="Martin-Doncel E."/>
            <person name="Rojas A.M."/>
            <person name="Cantarero L."/>
            <person name="Lazo P.A."/>
        </authorList>
    </citation>
    <scope>PHOSPHORYLATION AT THR-4 BY VRK1</scope>
</reference>
<reference key="66">
    <citation type="journal article" date="2020" name="Science">
        <title>Dopaminylation of histone H3 in ventral tegmental area regulates cocaine seeking.</title>
        <authorList>
            <person name="Lepack A.E."/>
            <person name="Werner C.T."/>
            <person name="Stewart A.F."/>
            <person name="Fulton S.L."/>
            <person name="Zhong P."/>
            <person name="Farrelly L.A."/>
            <person name="Smith A.C.W."/>
            <person name="Ramakrishnan A."/>
            <person name="Lyu Y."/>
            <person name="Bastle R.M."/>
            <person name="Martin J.A."/>
            <person name="Mitra S."/>
            <person name="O'Connor R.M."/>
            <person name="Wang Z.J."/>
            <person name="Molina H."/>
            <person name="Turecki G."/>
            <person name="Shen L."/>
            <person name="Yan Z."/>
            <person name="Calipari E.S."/>
            <person name="Dietz D.M."/>
            <person name="Kenny P.J."/>
            <person name="Maze I."/>
        </authorList>
    </citation>
    <scope>DOPAMINYLATION AT GLN-6</scope>
</reference>
<reference key="67">
    <citation type="journal article" date="2021" name="Elife">
        <title>Serine ADP-ribosylation marks nucleosomes for ALC1-dependent chromatin remodeling.</title>
        <authorList>
            <person name="Mohapatra J."/>
            <person name="Tashiro K."/>
            <person name="Beckner R.L."/>
            <person name="Sierra J."/>
            <person name="Kilgore J.A."/>
            <person name="Williams N.S."/>
            <person name="Liszczak G."/>
        </authorList>
    </citation>
    <scope>ADP-RIBOSYLATION AT SER-11</scope>
</reference>
<reference key="68">
    <citation type="journal article" date="2022" name="ACS Chem. Biol.">
        <title>Potent Activation of NAD+-Dependent Deacetylase Sirt7 by Nucleosome Binding.</title>
        <authorList>
            <person name="Kuznetsov V.I."/>
            <person name="Liu W.H."/>
            <person name="Klein M.A."/>
            <person name="Denu J.M."/>
        </authorList>
    </citation>
    <scope>ACETYLATION AT LYS-19</scope>
    <scope>ACYLATION AT LYS-19</scope>
</reference>
<reference key="69">
    <citation type="journal article" date="2014" name="Nature">
        <title>ZMYND11 links histone H3.3K36me3 to transcription elongation and tumour suppression.</title>
        <authorList>
            <person name="Wen H."/>
            <person name="Li Y."/>
            <person name="Xi Y."/>
            <person name="Jiang S."/>
            <person name="Stratton S."/>
            <person name="Peng D."/>
            <person name="Tanaka K."/>
            <person name="Ren Y."/>
            <person name="Xia Z."/>
            <person name="Wu J."/>
            <person name="Li B."/>
            <person name="Barton M.C."/>
            <person name="Li W."/>
            <person name="Li H."/>
            <person name="Shi X."/>
        </authorList>
    </citation>
    <scope>X-RAY CRYSTALLOGRAPHY (2.0 ANGSTROMS) OF 20-43 IN COMPLEX WITH ZMYND11</scope>
</reference>
<reference evidence="79 80" key="70">
    <citation type="journal article" date="2021" name="Mol. Cell">
        <title>DNAJC9 integrates heat shock molecular chaperones into the histone chaperone network.</title>
        <authorList>
            <person name="Hammond C.M."/>
            <person name="Bao H."/>
            <person name="Hendriks I.A."/>
            <person name="Carraro M."/>
            <person name="Garcia-Nieto A."/>
            <person name="Liu Y."/>
            <person name="Reveron-Gomez N."/>
            <person name="Spanos C."/>
            <person name="Chen L."/>
            <person name="Rappsilber J."/>
            <person name="Nielsen M.L."/>
            <person name="Patel D.J."/>
            <person name="Huang H."/>
            <person name="Groth A."/>
        </authorList>
    </citation>
    <scope>X-RAY CRYSTALLOGRAPHY (2.5 ANGSTROMS) OF 58-136 IN COMPLEX WITH DNJC9 171-249 MUTANT CYS-243; MCM2 61-130 AND HISTONE H4</scope>
    <scope>IDENTIFICATION IN A CO-CHAPERONE COMPLEX WITH DNJC9; MCM2 AND HISTONE H4</scope>
    <scope>INTERACTION WITH DNJC9; ASF1A; MCM2; NASP AND SPT2</scope>
    <scope>MUTAGENESIS OF 106-GLU-ASP-107</scope>
</reference>
<reference evidence="78" key="71">
    <citation type="journal article" date="2020" name="Nature">
        <title>Structural basis for sequestration and autoinhibition of cGAS by chromatin.</title>
        <authorList>
            <person name="Michalski S."/>
            <person name="de Oliveira Mann C.C."/>
            <person name="Stafford C.A."/>
            <person name="Witte G."/>
            <person name="Bartho J."/>
            <person name="Lammens K."/>
            <person name="Hornung V."/>
            <person name="Hopfner K.P."/>
        </authorList>
    </citation>
    <scope>STRUCTURE BY ELECTRON MICROSCOPY (3.11 ANGSTROMS) OF 2-136 IN COMPLEX WITH NUCLEOSOME CORE AND CGAS</scope>
</reference>
<reference key="72">
    <citation type="journal article" date="2012" name="Nat. Genet.">
        <title>Somatic histone H3 alterations in pediatric diffuse intrinsic pontine gliomas and non-brainstem glioblastomas.</title>
        <authorList>
            <consortium name="St. Jude Children's Research Hospital-Washington University Pediatric Cancer Genome Project"/>
            <person name="Wu G."/>
            <person name="Broniscer A."/>
            <person name="McEachron T.A."/>
            <person name="Lu C."/>
            <person name="Paugh B.S."/>
            <person name="Becksfort J."/>
            <person name="Qu C."/>
            <person name="Ding L."/>
            <person name="Huether R."/>
            <person name="Parker M."/>
            <person name="Zhang J."/>
            <person name="Gajjar A."/>
            <person name="Dyer M.A."/>
            <person name="Mullighan C.G."/>
            <person name="Gilbertson R.J."/>
            <person name="Mardis E.R."/>
            <person name="Wilson R.K."/>
            <person name="Downing J.R."/>
            <person name="Ellison D.W."/>
            <person name="Zhang J."/>
            <person name="Baker S.J."/>
        </authorList>
    </citation>
    <scope>VARIANT GLM MET-28</scope>
    <scope>INVOLVEMENT IN GLM</scope>
</reference>
<reference key="73">
    <citation type="journal article" date="2012" name="Nature">
        <title>Driver mutations in histone H3.3 and chromatin remodelling genes in paediatric glioblastoma.</title>
        <authorList>
            <person name="Schwartzentruber J."/>
            <person name="Korshunov A."/>
            <person name="Liu X.Y."/>
            <person name="Jones D.T."/>
            <person name="Pfaff E."/>
            <person name="Jacob K."/>
            <person name="Sturm D."/>
            <person name="Fontebasso A.M."/>
            <person name="Quang D.A."/>
            <person name="Toenjes M."/>
            <person name="Hovestadt V."/>
            <person name="Albrecht S."/>
            <person name="Kool M."/>
            <person name="Nantel A."/>
            <person name="Konermann C."/>
            <person name="Lindroth A."/>
            <person name="Jaeger N."/>
            <person name="Rausch T."/>
            <person name="Ryzhova M."/>
            <person name="Korbel J.O."/>
            <person name="Hielscher T."/>
            <person name="Hauser P."/>
            <person name="Garami M."/>
            <person name="Klekner A."/>
            <person name="Bognar L."/>
            <person name="Ebinger M."/>
            <person name="Schuhmann M.U."/>
            <person name="Scheurlen W."/>
            <person name="Pekrun A."/>
            <person name="Fruehwald M.C."/>
            <person name="Roggendorf W."/>
            <person name="Kramm C."/>
            <person name="Duerken M."/>
            <person name="Atkinson J."/>
            <person name="Lepage P."/>
            <person name="Montpetit A."/>
            <person name="Zakrzewska M."/>
            <person name="Zakrzewski K."/>
            <person name="Liberski P.P."/>
            <person name="Dong Z."/>
            <person name="Siegel P."/>
            <person name="Kulozik A.E."/>
            <person name="Zapatka M."/>
            <person name="Guha A."/>
            <person name="Malkin D."/>
            <person name="Felsberg J."/>
            <person name="Reifenberger G."/>
            <person name="von Deimling A."/>
            <person name="Ichimura K."/>
            <person name="Collins V.P."/>
            <person name="Witt H."/>
            <person name="Milde T."/>
            <person name="Witt O."/>
            <person name="Zhang C."/>
            <person name="Castelo-Branco P."/>
            <person name="Lichter P."/>
            <person name="Faury D."/>
            <person name="Tabori U."/>
            <person name="Plass C."/>
            <person name="Majewski J."/>
            <person name="Pfister S.M."/>
            <person name="Jabado N."/>
        </authorList>
    </citation>
    <scope>VARIANTS GLM MET-28; ARG-35 AND VAL-35</scope>
    <scope>INVOLVEMENT IN GLM</scope>
</reference>
<reference key="74">
    <citation type="journal article" date="2013" name="Cancer Discov.">
        <title>Histone H3.3. mutations drive pediatric glioblastoma through upregulation of MYCN.</title>
        <authorList>
            <person name="Bjerke L."/>
            <person name="Mackay A."/>
            <person name="Nandhabalan M."/>
            <person name="Burford A."/>
            <person name="Jury A."/>
            <person name="Popov S."/>
            <person name="Bax D.A."/>
            <person name="Carvalho D."/>
            <person name="Taylor K.R."/>
            <person name="Vinci M."/>
            <person name="Bajrami I."/>
            <person name="McGonnell I.M."/>
            <person name="Lord C.J."/>
            <person name="Reis R.M."/>
            <person name="Hargrave D."/>
            <person name="Ashworth A."/>
            <person name="Workman P."/>
            <person name="Jones C."/>
        </authorList>
    </citation>
    <scope>CHARACTERIZATION OF VARIANT GLM VAL-35</scope>
    <scope>INVOLVEMENT IN GLM</scope>
</reference>
<reference key="75">
    <citation type="journal article" date="2013" name="Genes Dev.">
        <title>The histone H3.3K27M mutation in pediatric glioma reprograms H3K27 methylation and gene expression.</title>
        <authorList>
            <person name="Chan K.M."/>
            <person name="Fang D."/>
            <person name="Gan H."/>
            <person name="Hashizume R."/>
            <person name="Yu C."/>
            <person name="Schroeder M."/>
            <person name="Gupta N."/>
            <person name="Mueller S."/>
            <person name="James C.D."/>
            <person name="Jenkins R."/>
            <person name="Sarkaria J."/>
            <person name="Zhang Z."/>
        </authorList>
    </citation>
    <scope>CHARACTERIZATION OF VARIANT GLM MET-28</scope>
</reference>
<reference key="76">
    <citation type="journal article" date="2013" name="Nat. Genet.">
        <title>Distinct H3F3A and H3F3B driver mutations define chondroblastoma and giant cell tumor of bone.</title>
        <authorList>
            <person name="Behjati S."/>
            <person name="Tarpey P.S."/>
            <person name="Presneau N."/>
            <person name="Scheipl S."/>
            <person name="Pillay N."/>
            <person name="Van Loo P."/>
            <person name="Wedge D.C."/>
            <person name="Cooke S.L."/>
            <person name="Gundem G."/>
            <person name="Davies H."/>
            <person name="Nik-Zainal S."/>
            <person name="Martin S."/>
            <person name="McLaren S."/>
            <person name="Goodie V."/>
            <person name="Robinson B."/>
            <person name="Butler A."/>
            <person name="Teague J.W."/>
            <person name="Halai D."/>
            <person name="Khatri B."/>
            <person name="Myklebost O."/>
            <person name="Baumhoer D."/>
            <person name="Jundt G."/>
            <person name="Hamoudi R."/>
            <person name="Tirabosco R."/>
            <person name="Amary M.F."/>
            <person name="Futreal P.A."/>
            <person name="Stratton M.R."/>
            <person name="Campbell P.J."/>
            <person name="Flanagan A.M."/>
        </authorList>
    </citation>
    <scope>VARIANTS TRP-35 AND MET-37</scope>
    <scope>INVOLVEMENT IN BONE AND CARTILAGE NEOPLASMS</scope>
</reference>
<reference key="77">
    <citation type="journal article" date="2013" name="Science">
        <title>Inhibition of PRC2 activity by a gain-of-function H3 mutation found in pediatric glioblastoma.</title>
        <authorList>
            <person name="Lewis P.W."/>
            <person name="Mueller M.M."/>
            <person name="Koletsky M.S."/>
            <person name="Cordero F."/>
            <person name="Lin S."/>
            <person name="Banaszynski L.A."/>
            <person name="Garcia B.A."/>
            <person name="Muir T.W."/>
            <person name="Becher O.J."/>
            <person name="Allis C.D."/>
        </authorList>
    </citation>
    <scope>CHARACTERIZATION OF VARIANTS GLM MET-28; ARG-35 AND VAL-35</scope>
</reference>
<reference key="78">
    <citation type="journal article" date="2016" name="Science">
        <title>Histone H3K36 mutations promote sarcomagenesis through altered histone methylation landscape.</title>
        <authorList>
            <person name="Lu C."/>
            <person name="Jain S.U."/>
            <person name="Hoelper D."/>
            <person name="Bechet D."/>
            <person name="Molden R.C."/>
            <person name="Ran L."/>
            <person name="Murphy D."/>
            <person name="Venneti S."/>
            <person name="Hameed M."/>
            <person name="Pawel B.R."/>
            <person name="Wunder J.S."/>
            <person name="Dickson B.C."/>
            <person name="Lundgren S.M."/>
            <person name="Jani K.S."/>
            <person name="De Jay N."/>
            <person name="Papillon-Cavanagh S."/>
            <person name="Andrulis I.L."/>
            <person name="Sawyer S.L."/>
            <person name="Grynspan D."/>
            <person name="Turcotte R.E."/>
            <person name="Nadaf J."/>
            <person name="Fahiminiyah S."/>
            <person name="Muir T.W."/>
            <person name="Majewski J."/>
            <person name="Thompson C.B."/>
            <person name="Chi P."/>
            <person name="Garcia B.A."/>
            <person name="Allis C.D."/>
            <person name="Jabado N."/>
            <person name="Lewis P.W."/>
        </authorList>
    </citation>
    <scope>CHARACTERIZATION OF VARIANT MET-37</scope>
</reference>
<reference key="79">
    <citation type="journal article" date="2017" name="Nat. Genet.">
        <title>Impaired H3K36 methylation defines a subset of head and neck squamous cell carcinomas.</title>
        <authorList>
            <person name="Papillon-Cavanagh S."/>
            <person name="Lu C."/>
            <person name="Gayden T."/>
            <person name="Mikael L.G."/>
            <person name="Bechet D."/>
            <person name="Karamboulas C."/>
            <person name="Ailles L."/>
            <person name="Karamchandani J."/>
            <person name="Marchione D.M."/>
            <person name="Garcia B.A."/>
            <person name="Weinreb I."/>
            <person name="Goldstein D."/>
            <person name="Lewis P.W."/>
            <person name="Dancu O.M."/>
            <person name="Dhaliwal S."/>
            <person name="Stecho W."/>
            <person name="Howlett C.J."/>
            <person name="Mymryk J.S."/>
            <person name="Barrett J.W."/>
            <person name="Nichols A.C."/>
            <person name="Allis C.D."/>
            <person name="Majewski J."/>
            <person name="Jabado N."/>
        </authorList>
    </citation>
    <scope>VARIANT MET-37</scope>
</reference>
<reference key="80">
    <citation type="journal article" date="2020" name="Sci. Adv.">
        <title>Histone H3.3 beyond cancer: Germline mutations in Histone 3 Family 3A and 3B cause a previously unidentified neurodegenerative disorder in 46 patients.</title>
        <authorList>
            <consortium name="DDD Study"/>
            <consortium name="Care4Rare Canada Consortium"/>
            <consortium name="CAUSES Study"/>
            <consortium name="Undiagnosed Diseases Network"/>
            <person name="Bryant L."/>
            <person name="Li D."/>
            <person name="Cox S.G."/>
            <person name="Marchione D."/>
            <person name="Joiner E.F."/>
            <person name="Wilson K."/>
            <person name="Janssen K."/>
            <person name="Lee P."/>
            <person name="March M.E."/>
            <person name="Nair D."/>
            <person name="Sherr E."/>
            <person name="Fregeau B."/>
            <person name="Wierenga K.J."/>
            <person name="Wadley A."/>
            <person name="Mancini G.M.S."/>
            <person name="Powell-Hamilton N."/>
            <person name="van de Kamp J."/>
            <person name="Grebe T."/>
            <person name="Dean J."/>
            <person name="Ross A."/>
            <person name="Crawford H.P."/>
            <person name="Powis Z."/>
            <person name="Cho M.T."/>
            <person name="Willing M.C."/>
            <person name="Manwaring L."/>
            <person name="Schot R."/>
            <person name="Nava C."/>
            <person name="Afenjar A."/>
            <person name="Lessel D."/>
            <person name="Wagner M."/>
            <person name="Klopstock T."/>
            <person name="Winkelmann J."/>
            <person name="Catarino C.B."/>
            <person name="Retterer K."/>
            <person name="Schuette J.L."/>
            <person name="Innis J.W."/>
            <person name="Pizzino A."/>
            <person name="Luettgen S."/>
            <person name="Denecke J."/>
            <person name="Strom T.M."/>
            <person name="Monaghan K.G."/>
            <person name="Yuan Z.F."/>
            <person name="Dubbs H."/>
            <person name="Bend R."/>
            <person name="Lee J.A."/>
            <person name="Lyons M.J."/>
            <person name="Hoefele J."/>
            <person name="Guenthner R."/>
            <person name="Reutter H."/>
            <person name="Keren B."/>
            <person name="Radtke K."/>
            <person name="Sherbini O."/>
            <person name="Mrokse C."/>
            <person name="Helbig K.L."/>
            <person name="Odent S."/>
            <person name="Cogne B."/>
            <person name="Mercier S."/>
            <person name="Bezieau S."/>
            <person name="Besnard T."/>
            <person name="Kury S."/>
            <person name="Redon R."/>
            <person name="Reinson K."/>
            <person name="Wojcik M.H."/>
            <person name="Ounap K."/>
            <person name="Ilves P."/>
            <person name="Innes A.M."/>
            <person name="Kernohan K.D."/>
            <person name="Costain G."/>
            <person name="Meyn M.S."/>
            <person name="Chitayat D."/>
            <person name="Zackai E."/>
            <person name="Lehman A."/>
            <person name="Kitson H."/>
            <person name="Martin M.G."/>
            <person name="Martinez-Agosto J.A."/>
            <person name="Nelson S.F."/>
            <person name="Palmer C.G.S."/>
            <person name="Papp J.C."/>
            <person name="Parker N.H."/>
            <person name="Sinsheimer J.S."/>
            <person name="Vilain E."/>
            <person name="Wan J."/>
            <person name="Yoon A.J."/>
            <person name="Zheng A."/>
            <person name="Brimble E."/>
            <person name="Ferrero G.B."/>
            <person name="Radio F.C."/>
            <person name="Carli D."/>
            <person name="Barresi S."/>
            <person name="Brusco A."/>
            <person name="Tartaglia M."/>
            <person name="Thomas J.M."/>
            <person name="Umana L."/>
            <person name="Weiss M.M."/>
            <person name="Gotway G."/>
            <person name="Stuurman K.E."/>
            <person name="Thompson M.L."/>
            <person name="McWalter K."/>
            <person name="Stumpel C.T.R.M."/>
            <person name="Stevens S.J.C."/>
            <person name="Stegmann A.P.A."/>
            <person name="Tveten K."/>
            <person name="Voello A."/>
            <person name="Prescott T."/>
            <person name="Fagerberg C."/>
            <person name="Laulund L.W."/>
            <person name="Larsen M.J."/>
            <person name="Byler M."/>
            <person name="Lebel R.R."/>
            <person name="Hurst A.C."/>
            <person name="Dean J."/>
            <person name="Schrier Vergano S.A."/>
            <person name="Norman J."/>
            <person name="Mercimek-Andrews S."/>
            <person name="Neira J."/>
            <person name="Van Allen M.I."/>
            <person name="Longo N."/>
            <person name="Sellars E."/>
            <person name="Louie R.J."/>
            <person name="Cathey S.S."/>
            <person name="Brokamp E."/>
            <person name="Heron D."/>
            <person name="Snyder M."/>
            <person name="Vanderver A."/>
            <person name="Simon C."/>
            <person name="de la Cruz X."/>
            <person name="Padilla N."/>
            <person name="Crump J.G."/>
            <person name="Chung W."/>
            <person name="Garcia B."/>
            <person name="Hakonarson H.H."/>
            <person name="Bhoj E.J."/>
        </authorList>
    </citation>
    <scope>VARIANTS BRYLIB1 GLY-9; SER-9; GLY-16; GLY-18; ILE-23; THR-30; PHE-32; GLU-37; TYR-40; ILE-46; ARG-62; ASN-78; HIS-82; CYS-84; ARG-91; SER-109; LEU-113; VAL-113; LEU-118; ILE-121; LYS-121; ARG-122; LEU-122; ARG-126 AND CYS-129</scope>
    <scope>VARIANTS BRYLIB2 CYS-9; PRO-11; ARG-14; PRO-30; VAL-35; ARG-40; ARG-49; SER-109; VAL-121; ARG-122 AND ARG-126</scope>
    <scope>INVOLVEMENT IN BRYLIB1</scope>
    <scope>INVOLVEMENT IN BRYLIB2</scope>
</reference>
<reference key="81">
    <citation type="journal article" date="2021" name="NPJ Genom. Med.">
        <title>De novo variants in H3-3A and H3-3B are associated with neurodevelopmental delay, dysmorphic features, and structural brain abnormalities.</title>
        <authorList>
            <person name="Okur V."/>
            <person name="Chen Z."/>
            <person name="Vossaert L."/>
            <person name="Peacock S."/>
            <person name="Rosenfeld J."/>
            <person name="Zhao L."/>
            <person name="Du H."/>
            <person name="Calamaro E."/>
            <person name="Gerard A."/>
            <person name="Zhao S."/>
            <person name="Kelsay J."/>
            <person name="Lahr A."/>
            <person name="Mighton C."/>
            <person name="Porter H.M."/>
            <person name="Siemon A."/>
            <person name="Silver J."/>
            <person name="Svihovec S."/>
            <person name="Fong C.T."/>
            <person name="Grant C.L."/>
            <person name="Lerner-Ellis J."/>
            <person name="Manickam K."/>
            <person name="Madan-Khetarpal S."/>
            <person name="McCandless S.E."/>
            <person name="Morel C.F."/>
            <person name="Schaefer G.B."/>
            <person name="Berry-Kravis E.M."/>
            <person name="Gates R."/>
            <person name="Gomez-Ospina N."/>
            <person name="Qiu G."/>
            <person name="Zhang T.J."/>
            <person name="Wu Z."/>
            <person name="Meng L."/>
            <person name="Liu P."/>
            <person name="Scott D.A."/>
            <person name="Lupski J.R."/>
            <person name="Eng C.M."/>
            <person name="Wu N."/>
            <person name="Yuan B."/>
        </authorList>
    </citation>
    <scope>VARIANTS BRYLIB1 CYS-41; LYS-56; ARG-91; ILE-121; LEU-122 AND HIS-129</scope>
    <scope>VARIANTS BRYLIB2 VAL-8; CYS-9; GLU-10; LYS-23 AND ASN-52</scope>
    <scope>CHARACTERIZATION OF VARIANTS BRYLIB1 CYS-41; LYS-56; ARG-91; ILE-121; LEU-122 AND HIS-129</scope>
    <scope>CHARACTERIZATION OF VARIANTS BRYLIB2 VAL-8; GLU-10; LYS-23 AND ASN-52</scope>
    <scope>SUBCELLULAR LOCATION</scope>
    <scope>INTERACTION WITH DAXX</scope>
    <scope>INVOLVEMENT IN BRYLIB1</scope>
    <scope>INVOLVEMENT IN BRYLIB2</scope>
</reference>
<protein>
    <recommendedName>
        <fullName>Histone H3.3</fullName>
    </recommendedName>
</protein>
<dbReference type="EMBL" id="M11354">
    <property type="protein sequence ID" value="AAA52653.1"/>
    <property type="molecule type" value="mRNA"/>
</dbReference>
<dbReference type="EMBL" id="M11353">
    <property type="protein sequence ID" value="AAA52654.1"/>
    <property type="molecule type" value="mRNA"/>
</dbReference>
<dbReference type="EMBL" id="Z48950">
    <property type="protein sequence ID" value="CAA88778.1"/>
    <property type="molecule type" value="Genomic_DNA"/>
</dbReference>
<dbReference type="EMBL" id="X05855">
    <property type="protein sequence ID" value="CAA29288.1"/>
    <property type="status" value="ALT_SEQ"/>
    <property type="molecule type" value="Genomic_DNA"/>
</dbReference>
<dbReference type="EMBL" id="X05856">
    <property type="protein sequence ID" value="CAA29288.1"/>
    <property type="status" value="JOINED"/>
    <property type="molecule type" value="Genomic_DNA"/>
</dbReference>
<dbReference type="EMBL" id="X05857">
    <property type="protein sequence ID" value="CAA29288.1"/>
    <property type="status" value="JOINED"/>
    <property type="molecule type" value="Genomic_DNA"/>
</dbReference>
<dbReference type="EMBL" id="AF218029">
    <property type="protein sequence ID" value="AAG17271.1"/>
    <property type="molecule type" value="mRNA"/>
</dbReference>
<dbReference type="EMBL" id="BX537379">
    <property type="protein sequence ID" value="CAD97621.1"/>
    <property type="molecule type" value="mRNA"/>
</dbReference>
<dbReference type="EMBL" id="AL512343">
    <property type="status" value="NOT_ANNOTATED_CDS"/>
    <property type="molecule type" value="Genomic_DNA"/>
</dbReference>
<dbReference type="EMBL" id="BC001124">
    <property type="protein sequence ID" value="AAH01124.1"/>
    <property type="molecule type" value="mRNA"/>
</dbReference>
<dbReference type="EMBL" id="BC006497">
    <property type="protein sequence ID" value="AAH06497.1"/>
    <property type="molecule type" value="mRNA"/>
</dbReference>
<dbReference type="EMBL" id="BC012813">
    <property type="protein sequence ID" value="AAH12813.1"/>
    <property type="molecule type" value="mRNA"/>
</dbReference>
<dbReference type="EMBL" id="BC017558">
    <property type="protein sequence ID" value="AAH17558.1"/>
    <property type="molecule type" value="mRNA"/>
</dbReference>
<dbReference type="EMBL" id="BC029405">
    <property type="protein sequence ID" value="AAH29405.1"/>
    <property type="molecule type" value="mRNA"/>
</dbReference>
<dbReference type="EMBL" id="BC038989">
    <property type="protein sequence ID" value="AAH38989.1"/>
    <property type="molecule type" value="mRNA"/>
</dbReference>
<dbReference type="EMBL" id="BC066901">
    <property type="status" value="NOT_ANNOTATED_CDS"/>
    <property type="molecule type" value="mRNA"/>
</dbReference>
<dbReference type="EMBL" id="BC067757">
    <property type="status" value="NOT_ANNOTATED_CDS"/>
    <property type="molecule type" value="mRNA"/>
</dbReference>
<dbReference type="EMBL" id="BC081560">
    <property type="protein sequence ID" value="AAH81560.1"/>
    <property type="molecule type" value="mRNA"/>
</dbReference>
<dbReference type="EMBL" id="BC081561">
    <property type="protein sequence ID" value="AAH81561.1"/>
    <property type="molecule type" value="mRNA"/>
</dbReference>
<dbReference type="EMBL" id="BC095447">
    <property type="protein sequence ID" value="AAH95447.1"/>
    <property type="molecule type" value="mRNA"/>
</dbReference>
<dbReference type="EMBL" id="BC108701">
    <property type="protein sequence ID" value="AAI08702.1"/>
    <property type="molecule type" value="mRNA"/>
</dbReference>
<dbReference type="CCDS" id="CCDS11729.1"/>
<dbReference type="CCDS" id="CCDS1550.1"/>
<dbReference type="PIR" id="A27501">
    <property type="entry name" value="HSHU33"/>
</dbReference>
<dbReference type="RefSeq" id="NP_001365972.1">
    <property type="nucleotide sequence ID" value="NM_001379043.1"/>
</dbReference>
<dbReference type="RefSeq" id="NP_001365974.1">
    <property type="nucleotide sequence ID" value="NM_001379045.1"/>
</dbReference>
<dbReference type="RefSeq" id="NP_001365975.1">
    <property type="nucleotide sequence ID" value="NM_001379046.1"/>
</dbReference>
<dbReference type="RefSeq" id="NP_001365976.1">
    <property type="nucleotide sequence ID" value="NM_001379047.1"/>
</dbReference>
<dbReference type="RefSeq" id="NP_002098.1">
    <property type="nucleotide sequence ID" value="NM_002107.7"/>
</dbReference>
<dbReference type="RefSeq" id="NP_005315.1">
    <property type="nucleotide sequence ID" value="NM_005324.4"/>
</dbReference>
<dbReference type="PDB" id="2L43">
    <property type="method" value="NMR"/>
    <property type="chains" value="A=2-13"/>
</dbReference>
<dbReference type="PDB" id="3ASK">
    <property type="method" value="X-ray"/>
    <property type="resolution" value="2.90 A"/>
    <property type="chains" value="P/Q/R=2-14"/>
</dbReference>
<dbReference type="PDB" id="3ASL">
    <property type="method" value="X-ray"/>
    <property type="resolution" value="1.41 A"/>
    <property type="chains" value="B=2-12"/>
</dbReference>
<dbReference type="PDB" id="3AV2">
    <property type="method" value="X-ray"/>
    <property type="resolution" value="2.80 A"/>
    <property type="chains" value="A/E=1-136"/>
</dbReference>
<dbReference type="PDB" id="3JVK">
    <property type="method" value="X-ray"/>
    <property type="resolution" value="1.80 A"/>
    <property type="chains" value="C=13-20"/>
</dbReference>
<dbReference type="PDB" id="3MUK">
    <property type="method" value="X-ray"/>
    <property type="resolution" value="1.75 A"/>
    <property type="chains" value="D=22-29"/>
</dbReference>
<dbReference type="PDB" id="3MUL">
    <property type="method" value="X-ray"/>
    <property type="resolution" value="1.65 A"/>
    <property type="chains" value="D=13-20"/>
</dbReference>
<dbReference type="PDB" id="3QL9">
    <property type="method" value="X-ray"/>
    <property type="resolution" value="0.93 A"/>
    <property type="chains" value="C=2-16"/>
</dbReference>
<dbReference type="PDB" id="3QLA">
    <property type="method" value="X-ray"/>
    <property type="resolution" value="1.60 A"/>
    <property type="chains" value="C/F=2-16"/>
</dbReference>
<dbReference type="PDB" id="3QLC">
    <property type="method" value="X-ray"/>
    <property type="resolution" value="2.50 A"/>
    <property type="chains" value="C/D=2-16"/>
</dbReference>
<dbReference type="PDB" id="3WTP">
    <property type="method" value="X-ray"/>
    <property type="resolution" value="2.67 A"/>
    <property type="chains" value="E=1-136"/>
</dbReference>
<dbReference type="PDB" id="4GNE">
    <property type="method" value="X-ray"/>
    <property type="resolution" value="1.47 A"/>
    <property type="chains" value="B=2-8"/>
</dbReference>
<dbReference type="PDB" id="4GNF">
    <property type="method" value="X-ray"/>
    <property type="resolution" value="1.55 A"/>
    <property type="chains" value="C=2-16"/>
</dbReference>
<dbReference type="PDB" id="4GNG">
    <property type="method" value="X-ray"/>
    <property type="resolution" value="1.73 A"/>
    <property type="chains" value="B/F=2-16"/>
</dbReference>
<dbReference type="PDB" id="4GU0">
    <property type="method" value="X-ray"/>
    <property type="resolution" value="3.10 A"/>
    <property type="chains" value="E/F=2-27"/>
</dbReference>
<dbReference type="PDB" id="4GUR">
    <property type="method" value="X-ray"/>
    <property type="resolution" value="2.51 A"/>
    <property type="chains" value="C=2-22"/>
</dbReference>
<dbReference type="PDB" id="4GUS">
    <property type="method" value="X-ray"/>
    <property type="resolution" value="2.23 A"/>
    <property type="chains" value="C=2-22"/>
</dbReference>
<dbReference type="PDB" id="4GY5">
    <property type="method" value="X-ray"/>
    <property type="resolution" value="2.96 A"/>
    <property type="chains" value="E/F=2-18"/>
</dbReference>
<dbReference type="PDB" id="4H9N">
    <property type="method" value="X-ray"/>
    <property type="resolution" value="1.95 A"/>
    <property type="chains" value="A=2-136"/>
</dbReference>
<dbReference type="PDB" id="4H9O">
    <property type="method" value="X-ray"/>
    <property type="resolution" value="2.05 A"/>
    <property type="chains" value="A=2-136"/>
</dbReference>
<dbReference type="PDB" id="4H9P">
    <property type="method" value="X-ray"/>
    <property type="resolution" value="2.20 A"/>
    <property type="chains" value="A=2-136"/>
</dbReference>
<dbReference type="PDB" id="4H9Q">
    <property type="method" value="X-ray"/>
    <property type="resolution" value="1.95 A"/>
    <property type="chains" value="A=2-136"/>
</dbReference>
<dbReference type="PDB" id="4H9R">
    <property type="method" value="X-ray"/>
    <property type="resolution" value="2.20 A"/>
    <property type="chains" value="A=2-136"/>
</dbReference>
<dbReference type="PDB" id="4H9S">
    <property type="method" value="X-ray"/>
    <property type="resolution" value="2.60 A"/>
    <property type="chains" value="A/B=2-136"/>
</dbReference>
<dbReference type="PDB" id="4HGA">
    <property type="method" value="X-ray"/>
    <property type="resolution" value="2.80 A"/>
    <property type="chains" value="B=1-136"/>
</dbReference>
<dbReference type="PDB" id="4L58">
    <property type="method" value="X-ray"/>
    <property type="resolution" value="1.48 A"/>
    <property type="chains" value="B=2-13"/>
</dbReference>
<dbReference type="PDB" id="4N4I">
    <property type="method" value="X-ray"/>
    <property type="resolution" value="2.00 A"/>
    <property type="chains" value="B=20-43"/>
</dbReference>
<dbReference type="PDB" id="4O62">
    <property type="method" value="X-ray"/>
    <property type="resolution" value="1.78 A"/>
    <property type="chains" value="D=2-12"/>
</dbReference>
<dbReference type="PDB" id="4QQ4">
    <property type="method" value="X-ray"/>
    <property type="resolution" value="1.75 A"/>
    <property type="chains" value="C/D=2-16"/>
</dbReference>
<dbReference type="PDB" id="4TMP">
    <property type="method" value="X-ray"/>
    <property type="resolution" value="2.30 A"/>
    <property type="chains" value="B/D=2-12"/>
</dbReference>
<dbReference type="PDB" id="4U7T">
    <property type="method" value="X-ray"/>
    <property type="resolution" value="2.90 A"/>
    <property type="chains" value="F/G=2-13"/>
</dbReference>
<dbReference type="PDB" id="4W5A">
    <property type="method" value="X-ray"/>
    <property type="resolution" value="2.60 A"/>
    <property type="chains" value="C/D/F=2-16"/>
</dbReference>
<dbReference type="PDB" id="5B32">
    <property type="method" value="X-ray"/>
    <property type="resolution" value="2.35 A"/>
    <property type="chains" value="A/E=1-136"/>
</dbReference>
<dbReference type="PDB" id="5B33">
    <property type="method" value="X-ray"/>
    <property type="resolution" value="2.92 A"/>
    <property type="chains" value="A/E=1-136"/>
</dbReference>
<dbReference type="PDB" id="5BNV">
    <property type="method" value="X-ray"/>
    <property type="resolution" value="2.79 A"/>
    <property type="chains" value="A/D=58-136"/>
</dbReference>
<dbReference type="PDB" id="5BNX">
    <property type="method" value="X-ray"/>
    <property type="resolution" value="2.31 A"/>
    <property type="chains" value="A=58-136"/>
</dbReference>
<dbReference type="PDB" id="5DWQ">
    <property type="method" value="X-ray"/>
    <property type="resolution" value="2.36 A"/>
    <property type="chains" value="F/G=14-31"/>
</dbReference>
<dbReference type="PDB" id="5DX0">
    <property type="method" value="X-ray"/>
    <property type="resolution" value="2.05 A"/>
    <property type="chains" value="F/G/H/I=14-31"/>
</dbReference>
<dbReference type="PDB" id="5JA4">
    <property type="method" value="X-ray"/>
    <property type="resolution" value="2.42 A"/>
    <property type="chains" value="A=58-136"/>
</dbReference>
<dbReference type="PDB" id="5JJY">
    <property type="method" value="X-ray"/>
    <property type="resolution" value="2.05 A"/>
    <property type="chains" value="B=30-43"/>
</dbReference>
<dbReference type="PDB" id="5JLB">
    <property type="method" value="X-ray"/>
    <property type="resolution" value="1.50 A"/>
    <property type="chains" value="B=30-43"/>
</dbReference>
<dbReference type="PDB" id="5KDM">
    <property type="method" value="X-ray"/>
    <property type="resolution" value="3.50 A"/>
    <property type="chains" value="A=2-136"/>
</dbReference>
<dbReference type="PDB" id="5X7X">
    <property type="method" value="X-ray"/>
    <property type="resolution" value="2.18 A"/>
    <property type="chains" value="A/E=1-136"/>
</dbReference>
<dbReference type="PDB" id="6A5L">
    <property type="method" value="EM"/>
    <property type="resolution" value="5.60 A"/>
    <property type="chains" value="a/e=1-136"/>
</dbReference>
<dbReference type="PDB" id="6A5O">
    <property type="method" value="EM"/>
    <property type="resolution" value="9.90 A"/>
    <property type="chains" value="a/e=1-136"/>
</dbReference>
<dbReference type="PDB" id="6A5P">
    <property type="method" value="EM"/>
    <property type="resolution" value="7.00 A"/>
    <property type="chains" value="a/e=1-136"/>
</dbReference>
<dbReference type="PDB" id="6A5R">
    <property type="method" value="EM"/>
    <property type="resolution" value="8.70 A"/>
    <property type="chains" value="a/e=1-136"/>
</dbReference>
<dbReference type="PDB" id="6A5T">
    <property type="method" value="EM"/>
    <property type="resolution" value="6.70 A"/>
    <property type="chains" value="a/e=1-136"/>
</dbReference>
<dbReference type="PDB" id="6A5U">
    <property type="method" value="EM"/>
    <property type="resolution" value="7.60 A"/>
    <property type="chains" value="a/e=1-136"/>
</dbReference>
<dbReference type="PDB" id="6HGT">
    <property type="method" value="X-ray"/>
    <property type="resolution" value="2.33 A"/>
    <property type="chains" value="E/F/G/H=4-18"/>
</dbReference>
<dbReference type="PDB" id="6INQ">
    <property type="method" value="EM"/>
    <property type="resolution" value="6.90 A"/>
    <property type="chains" value="a/e=1-136"/>
</dbReference>
<dbReference type="PDB" id="6IR9">
    <property type="method" value="EM"/>
    <property type="resolution" value="3.80 A"/>
    <property type="chains" value="a/e=1-136"/>
</dbReference>
<dbReference type="PDB" id="6J4W">
    <property type="method" value="EM"/>
    <property type="resolution" value="7.90 A"/>
    <property type="chains" value="a/e=1-136"/>
</dbReference>
<dbReference type="PDB" id="6J4X">
    <property type="method" value="EM"/>
    <property type="resolution" value="4.30 A"/>
    <property type="chains" value="a/e=1-136"/>
</dbReference>
<dbReference type="PDB" id="6J4Y">
    <property type="method" value="EM"/>
    <property type="resolution" value="4.30 A"/>
    <property type="chains" value="a/e=1-136"/>
</dbReference>
<dbReference type="PDB" id="6J4Z">
    <property type="method" value="EM"/>
    <property type="resolution" value="4.10 A"/>
    <property type="chains" value="a/e=1-136"/>
</dbReference>
<dbReference type="PDB" id="6J50">
    <property type="method" value="EM"/>
    <property type="resolution" value="4.70 A"/>
    <property type="chains" value="a/e=1-136"/>
</dbReference>
<dbReference type="PDB" id="6J51">
    <property type="method" value="EM"/>
    <property type="resolution" value="4.20 A"/>
    <property type="chains" value="a/e=1-136"/>
</dbReference>
<dbReference type="PDB" id="6J9J">
    <property type="method" value="X-ray"/>
    <property type="resolution" value="1.78 A"/>
    <property type="chains" value="B=30-43"/>
</dbReference>
<dbReference type="PDB" id="6PZV">
    <property type="method" value="X-ray"/>
    <property type="resolution" value="3.01 A"/>
    <property type="chains" value="D/H=2-27"/>
</dbReference>
<dbReference type="PDB" id="6QXZ">
    <property type="method" value="NMR"/>
    <property type="chains" value="B=2-10"/>
</dbReference>
<dbReference type="PDB" id="6R0C">
    <property type="method" value="EM"/>
    <property type="resolution" value="4.20 A"/>
    <property type="chains" value="A/E=1-136"/>
</dbReference>
<dbReference type="PDB" id="6RNY">
    <property type="method" value="EM"/>
    <property type="resolution" value="3.90 A"/>
    <property type="chains" value="A/E=1-136"/>
</dbReference>
<dbReference type="PDB" id="6U04">
    <property type="method" value="X-ray"/>
    <property type="resolution" value="2.20 A"/>
    <property type="chains" value="A=2-13"/>
</dbReference>
<dbReference type="PDB" id="7A08">
    <property type="method" value="EM"/>
    <property type="resolution" value="3.11 A"/>
    <property type="chains" value="d/h=2-136"/>
</dbReference>
<dbReference type="PDB" id="7CIZ">
    <property type="method" value="X-ray"/>
    <property type="resolution" value="1.80 A"/>
    <property type="chains" value="A/E/I=58-136"/>
</dbReference>
<dbReference type="PDB" id="7CJ0">
    <property type="method" value="X-ray"/>
    <property type="resolution" value="2.50 A"/>
    <property type="chains" value="B/E=58-136"/>
</dbReference>
<dbReference type="PDB" id="7CWH">
    <property type="method" value="NMR"/>
    <property type="chains" value="A=32-42"/>
</dbReference>
<dbReference type="PDB" id="7OKP">
    <property type="method" value="X-ray"/>
    <property type="resolution" value="2.20 A"/>
    <property type="chains" value="E/F/G/H=14-23"/>
</dbReference>
<dbReference type="PDB" id="7V1L">
    <property type="method" value="X-ray"/>
    <property type="resolution" value="2.85 A"/>
    <property type="chains" value="V=117-136"/>
</dbReference>
<dbReference type="PDB" id="7V1M">
    <property type="method" value="X-ray"/>
    <property type="resolution" value="2.83 A"/>
    <property type="chains" value="A/B=2-136"/>
</dbReference>
<dbReference type="PDB" id="7VCQ">
    <property type="method" value="X-ray"/>
    <property type="resolution" value="3.00 A"/>
    <property type="chains" value="A/C/G=58-136"/>
</dbReference>
<dbReference type="PDB" id="7W5M">
    <property type="method" value="X-ray"/>
    <property type="resolution" value="2.15 A"/>
    <property type="chains" value="B=117-136"/>
</dbReference>
<dbReference type="PDB" id="7WBV">
    <property type="method" value="EM"/>
    <property type="resolution" value="4.10 A"/>
    <property type="chains" value="a/e=1-136"/>
</dbReference>
<dbReference type="PDB" id="7WBW">
    <property type="method" value="EM"/>
    <property type="resolution" value="7.10 A"/>
    <property type="chains" value="a/e=1-136"/>
</dbReference>
<dbReference type="PDB" id="7WBX">
    <property type="method" value="EM"/>
    <property type="resolution" value="4.00 A"/>
    <property type="chains" value="a/e=1-136"/>
</dbReference>
<dbReference type="PDB" id="7XSE">
    <property type="method" value="EM"/>
    <property type="resolution" value="3.60 A"/>
    <property type="chains" value="a/e=1-136"/>
</dbReference>
<dbReference type="PDB" id="7XSX">
    <property type="method" value="EM"/>
    <property type="resolution" value="3.80 A"/>
    <property type="chains" value="a/e=1-136"/>
</dbReference>
<dbReference type="PDB" id="7XSZ">
    <property type="method" value="EM"/>
    <property type="resolution" value="3.40 A"/>
    <property type="chains" value="a/e=1-136"/>
</dbReference>
<dbReference type="PDB" id="7XT7">
    <property type="method" value="EM"/>
    <property type="resolution" value="4.20 A"/>
    <property type="chains" value="a/e=1-136"/>
</dbReference>
<dbReference type="PDB" id="7XTD">
    <property type="method" value="EM"/>
    <property type="resolution" value="3.90 A"/>
    <property type="chains" value="a/e=1-136"/>
</dbReference>
<dbReference type="PDB" id="7XTI">
    <property type="method" value="EM"/>
    <property type="resolution" value="3.90 A"/>
    <property type="chains" value="a/e=1-136"/>
</dbReference>
<dbReference type="PDB" id="8JH2">
    <property type="method" value="EM"/>
    <property type="resolution" value="5.70 A"/>
    <property type="chains" value="a/e=1-136"/>
</dbReference>
<dbReference type="PDB" id="8JH3">
    <property type="method" value="EM"/>
    <property type="resolution" value="3.70 A"/>
    <property type="chains" value="a/e=1-136"/>
</dbReference>
<dbReference type="PDB" id="8JH4">
    <property type="method" value="EM"/>
    <property type="resolution" value="3.20 A"/>
    <property type="chains" value="a/e=1-136"/>
</dbReference>
<dbReference type="PDB" id="8KB5">
    <property type="method" value="EM"/>
    <property type="resolution" value="2.26 A"/>
    <property type="chains" value="A/E=1-135"/>
</dbReference>
<dbReference type="PDB" id="9B3P">
    <property type="method" value="EM"/>
    <property type="resolution" value="3.00 A"/>
    <property type="chains" value="A/E=1-136"/>
</dbReference>
<dbReference type="PDB" id="9EOZ">
    <property type="method" value="EM"/>
    <property type="resolution" value="3.10 A"/>
    <property type="chains" value="E/K=2-136"/>
</dbReference>
<dbReference type="PDB" id="9J0N">
    <property type="method" value="EM"/>
    <property type="resolution" value="3.40 A"/>
    <property type="chains" value="a/e=1-136"/>
</dbReference>
<dbReference type="PDB" id="9J0O">
    <property type="method" value="EM"/>
    <property type="resolution" value="3.30 A"/>
    <property type="chains" value="a/e=1-136"/>
</dbReference>
<dbReference type="PDB" id="9J0P">
    <property type="method" value="EM"/>
    <property type="resolution" value="3.30 A"/>
    <property type="chains" value="a/e=1-136"/>
</dbReference>
<dbReference type="PDBsum" id="2L43"/>
<dbReference type="PDBsum" id="3ASK"/>
<dbReference type="PDBsum" id="3ASL"/>
<dbReference type="PDBsum" id="3AV2"/>
<dbReference type="PDBsum" id="3JVK"/>
<dbReference type="PDBsum" id="3MUK"/>
<dbReference type="PDBsum" id="3MUL"/>
<dbReference type="PDBsum" id="3QL9"/>
<dbReference type="PDBsum" id="3QLA"/>
<dbReference type="PDBsum" id="3QLC"/>
<dbReference type="PDBsum" id="3WTP"/>
<dbReference type="PDBsum" id="4GNE"/>
<dbReference type="PDBsum" id="4GNF"/>
<dbReference type="PDBsum" id="4GNG"/>
<dbReference type="PDBsum" id="4GU0"/>
<dbReference type="PDBsum" id="4GUR"/>
<dbReference type="PDBsum" id="4GUS"/>
<dbReference type="PDBsum" id="4GY5"/>
<dbReference type="PDBsum" id="4H9N"/>
<dbReference type="PDBsum" id="4H9O"/>
<dbReference type="PDBsum" id="4H9P"/>
<dbReference type="PDBsum" id="4H9Q"/>
<dbReference type="PDBsum" id="4H9R"/>
<dbReference type="PDBsum" id="4H9S"/>
<dbReference type="PDBsum" id="4HGA"/>
<dbReference type="PDBsum" id="4L58"/>
<dbReference type="PDBsum" id="4N4I"/>
<dbReference type="PDBsum" id="4O62"/>
<dbReference type="PDBsum" id="4QQ4"/>
<dbReference type="PDBsum" id="4TMP"/>
<dbReference type="PDBsum" id="4U7T"/>
<dbReference type="PDBsum" id="4W5A"/>
<dbReference type="PDBsum" id="5B32"/>
<dbReference type="PDBsum" id="5B33"/>
<dbReference type="PDBsum" id="5BNV"/>
<dbReference type="PDBsum" id="5BNX"/>
<dbReference type="PDBsum" id="5DWQ"/>
<dbReference type="PDBsum" id="5DX0"/>
<dbReference type="PDBsum" id="5JA4"/>
<dbReference type="PDBsum" id="5JJY"/>
<dbReference type="PDBsum" id="5JLB"/>
<dbReference type="PDBsum" id="5KDM"/>
<dbReference type="PDBsum" id="5X7X"/>
<dbReference type="PDBsum" id="6A5L"/>
<dbReference type="PDBsum" id="6A5O"/>
<dbReference type="PDBsum" id="6A5P"/>
<dbReference type="PDBsum" id="6A5R"/>
<dbReference type="PDBsum" id="6A5T"/>
<dbReference type="PDBsum" id="6A5U"/>
<dbReference type="PDBsum" id="6HGT"/>
<dbReference type="PDBsum" id="6INQ"/>
<dbReference type="PDBsum" id="6IR9"/>
<dbReference type="PDBsum" id="6J4W"/>
<dbReference type="PDBsum" id="6J4X"/>
<dbReference type="PDBsum" id="6J4Y"/>
<dbReference type="PDBsum" id="6J4Z"/>
<dbReference type="PDBsum" id="6J50"/>
<dbReference type="PDBsum" id="6J51"/>
<dbReference type="PDBsum" id="6J9J"/>
<dbReference type="PDBsum" id="6PZV"/>
<dbReference type="PDBsum" id="6QXZ"/>
<dbReference type="PDBsum" id="6R0C"/>
<dbReference type="PDBsum" id="6RNY"/>
<dbReference type="PDBsum" id="6U04"/>
<dbReference type="PDBsum" id="7A08"/>
<dbReference type="PDBsum" id="7CIZ"/>
<dbReference type="PDBsum" id="7CJ0"/>
<dbReference type="PDBsum" id="7CWH"/>
<dbReference type="PDBsum" id="7OKP"/>
<dbReference type="PDBsum" id="7V1L"/>
<dbReference type="PDBsum" id="7V1M"/>
<dbReference type="PDBsum" id="7VCQ"/>
<dbReference type="PDBsum" id="7W5M"/>
<dbReference type="PDBsum" id="7WBV"/>
<dbReference type="PDBsum" id="7WBW"/>
<dbReference type="PDBsum" id="7WBX"/>
<dbReference type="PDBsum" id="7XSE"/>
<dbReference type="PDBsum" id="7XSX"/>
<dbReference type="PDBsum" id="7XSZ"/>
<dbReference type="PDBsum" id="7XT7"/>
<dbReference type="PDBsum" id="7XTD"/>
<dbReference type="PDBsum" id="7XTI"/>
<dbReference type="PDBsum" id="8JH2"/>
<dbReference type="PDBsum" id="8JH3"/>
<dbReference type="PDBsum" id="8JH4"/>
<dbReference type="PDBsum" id="8KB5"/>
<dbReference type="PDBsum" id="9B3P"/>
<dbReference type="PDBsum" id="9EOZ"/>
<dbReference type="PDBsum" id="9J0N"/>
<dbReference type="PDBsum" id="9J0O"/>
<dbReference type="PDBsum" id="9J0P"/>
<dbReference type="EMDB" id="EMD-0671"/>
<dbReference type="EMDB" id="EMD-0672"/>
<dbReference type="EMDB" id="EMD-0673"/>
<dbReference type="EMDB" id="EMD-0674"/>
<dbReference type="EMDB" id="EMD-0675"/>
<dbReference type="EMDB" id="EMD-0676"/>
<dbReference type="EMDB" id="EMD-11601"/>
<dbReference type="EMDB" id="EMD-19870"/>
<dbReference type="EMDB" id="EMD-32407"/>
<dbReference type="EMDB" id="EMD-32408"/>
<dbReference type="EMDB" id="EMD-32409"/>
<dbReference type="EMDB" id="EMD-33424"/>
<dbReference type="EMDB" id="EMD-33436"/>
<dbReference type="EMDB" id="EMD-33437"/>
<dbReference type="EMDB" id="EMD-33441"/>
<dbReference type="EMDB" id="EMD-33447"/>
<dbReference type="EMDB" id="EMD-33450"/>
<dbReference type="EMDB" id="EMD-36251"/>
<dbReference type="EMDB" id="EMD-36252"/>
<dbReference type="EMDB" id="EMD-36253"/>
<dbReference type="EMDB" id="EMD-37070"/>
<dbReference type="EMDB" id="EMD-44148"/>
<dbReference type="EMDB" id="EMD-4692"/>
<dbReference type="EMDB" id="EMD-4960"/>
<dbReference type="EMDB" id="EMD-51647"/>
<dbReference type="EMDB" id="EMD-61058"/>
<dbReference type="EMDB" id="EMD-61059"/>
<dbReference type="EMDB" id="EMD-61060"/>
<dbReference type="EMDB" id="EMD-6980"/>
<dbReference type="EMDB" id="EMD-6981"/>
<dbReference type="EMDB" id="EMD-6982"/>
<dbReference type="EMDB" id="EMD-6983"/>
<dbReference type="EMDB" id="EMD-6984"/>
<dbReference type="EMDB" id="EMD-6985"/>
<dbReference type="EMDB" id="EMD-6986"/>
<dbReference type="EMDB" id="EMD-9713"/>
<dbReference type="SASBDB" id="P84243"/>
<dbReference type="SMR" id="P84243"/>
<dbReference type="BioGRID" id="109272">
    <property type="interactions" value="947"/>
</dbReference>
<dbReference type="BioGRID" id="109273">
    <property type="interactions" value="109"/>
</dbReference>
<dbReference type="CORUM" id="P84243"/>
<dbReference type="DIP" id="DIP-40046N"/>
<dbReference type="FunCoup" id="P84243">
    <property type="interactions" value="2962"/>
</dbReference>
<dbReference type="IntAct" id="P84243">
    <property type="interactions" value="129"/>
</dbReference>
<dbReference type="MINT" id="P84243"/>
<dbReference type="STRING" id="9606.ENSP00000254810"/>
<dbReference type="GlyCosmos" id="P84243">
    <property type="glycosylation" value="1 site, 1 glycan"/>
</dbReference>
<dbReference type="GlyGen" id="P84243">
    <property type="glycosylation" value="2 sites, 1 O-linked glycan (2 sites)"/>
</dbReference>
<dbReference type="iPTMnet" id="P84243"/>
<dbReference type="MetOSite" id="P84243"/>
<dbReference type="PhosphoSitePlus" id="P84243"/>
<dbReference type="SwissPalm" id="P84243"/>
<dbReference type="BioMuta" id="H3F3A"/>
<dbReference type="DMDM" id="55977062"/>
<dbReference type="jPOST" id="P84243"/>
<dbReference type="MassIVE" id="P84243"/>
<dbReference type="PaxDb" id="9606-ENSP00000254810"/>
<dbReference type="PeptideAtlas" id="P84243"/>
<dbReference type="ProteomicsDB" id="57757"/>
<dbReference type="Pumba" id="P84243"/>
<dbReference type="TopDownProteomics" id="P84243"/>
<dbReference type="Antibodypedia" id="32264">
    <property type="antibodies" value="743 antibodies from 41 providers"/>
</dbReference>
<dbReference type="Antibodypedia" id="54014">
    <property type="antibodies" value="582 antibodies from 18 providers"/>
</dbReference>
<dbReference type="DNASU" id="3020"/>
<dbReference type="Ensembl" id="ENST00000254810.8">
    <property type="protein sequence ID" value="ENSP00000254810.3"/>
    <property type="gene ID" value="ENSG00000132475.10"/>
</dbReference>
<dbReference type="Ensembl" id="ENST00000366813.1">
    <property type="protein sequence ID" value="ENSP00000355778.1"/>
    <property type="gene ID" value="ENSG00000163041.13"/>
</dbReference>
<dbReference type="Ensembl" id="ENST00000366815.10">
    <property type="protein sequence ID" value="ENSP00000355780.3"/>
    <property type="gene ID" value="ENSG00000163041.13"/>
</dbReference>
<dbReference type="Ensembl" id="ENST00000366816.5">
    <property type="protein sequence ID" value="ENSP00000355781.1"/>
    <property type="gene ID" value="ENSG00000163041.13"/>
</dbReference>
<dbReference type="Ensembl" id="ENST00000586607.5">
    <property type="protein sequence ID" value="ENSP00000466020.1"/>
    <property type="gene ID" value="ENSG00000132475.10"/>
</dbReference>
<dbReference type="Ensembl" id="ENST00000587560.5">
    <property type="protein sequence ID" value="ENSP00000468714.1"/>
    <property type="gene ID" value="ENSG00000132475.10"/>
</dbReference>
<dbReference type="Ensembl" id="ENST00000589599.5">
    <property type="protein sequence ID" value="ENSP00000465813.1"/>
    <property type="gene ID" value="ENSG00000132475.10"/>
</dbReference>
<dbReference type="Ensembl" id="ENST00000655399.1">
    <property type="protein sequence ID" value="ENSP00000499800.1"/>
    <property type="gene ID" value="ENSG00000163041.13"/>
</dbReference>
<dbReference type="Ensembl" id="ENST00000661429.1">
    <property type="protein sequence ID" value="ENSP00000499385.1"/>
    <property type="gene ID" value="ENSG00000163041.13"/>
</dbReference>
<dbReference type="Ensembl" id="ENST00000666609.1">
    <property type="protein sequence ID" value="ENSP00000499275.1"/>
    <property type="gene ID" value="ENSG00000163041.13"/>
</dbReference>
<dbReference type="GeneID" id="3020"/>
<dbReference type="GeneID" id="3021"/>
<dbReference type="KEGG" id="hsa:3020"/>
<dbReference type="KEGG" id="hsa:3021"/>
<dbReference type="MANE-Select" id="ENST00000254810.8">
    <property type="protein sequence ID" value="ENSP00000254810.3"/>
    <property type="RefSeq nucleotide sequence ID" value="NM_005324.5"/>
    <property type="RefSeq protein sequence ID" value="NP_005315.1"/>
</dbReference>
<dbReference type="MANE-Select" id="ENST00000366815.10">
    <property type="protein sequence ID" value="ENSP00000355780.3"/>
    <property type="RefSeq nucleotide sequence ID" value="NM_002107.7"/>
    <property type="RefSeq protein sequence ID" value="NP_002098.1"/>
</dbReference>
<dbReference type="UCSC" id="uc001hpw.4">
    <property type="organism name" value="human"/>
</dbReference>
<dbReference type="AGR" id="HGNC:4764"/>
<dbReference type="AGR" id="HGNC:4765"/>
<dbReference type="CTD" id="3020"/>
<dbReference type="CTD" id="3021"/>
<dbReference type="DisGeNET" id="3020"/>
<dbReference type="DisGeNET" id="3021"/>
<dbReference type="GeneCards" id="H3-3A"/>
<dbReference type="GeneCards" id="H3-3B"/>
<dbReference type="GeneReviews" id="H3-3A"/>
<dbReference type="GeneReviews" id="H3-3B"/>
<dbReference type="HGNC" id="HGNC:4764">
    <property type="gene designation" value="H3-3A"/>
</dbReference>
<dbReference type="HGNC" id="HGNC:4765">
    <property type="gene designation" value="H3-3B"/>
</dbReference>
<dbReference type="HPA" id="ENSG00000132475">
    <property type="expression patterns" value="Tissue enhanced (bone)"/>
</dbReference>
<dbReference type="HPA" id="ENSG00000163041">
    <property type="expression patterns" value="Low tissue specificity"/>
</dbReference>
<dbReference type="MalaCards" id="H3-3A"/>
<dbReference type="MalaCards" id="H3-3B"/>
<dbReference type="MIM" id="137800">
    <property type="type" value="phenotype"/>
</dbReference>
<dbReference type="MIM" id="601058">
    <property type="type" value="gene"/>
</dbReference>
<dbReference type="MIM" id="601128">
    <property type="type" value="gene"/>
</dbReference>
<dbReference type="MIM" id="619720">
    <property type="type" value="phenotype"/>
</dbReference>
<dbReference type="MIM" id="619721">
    <property type="type" value="phenotype"/>
</dbReference>
<dbReference type="neXtProt" id="NX_P84243"/>
<dbReference type="OpenTargets" id="ENSG00000132475"/>
<dbReference type="OpenTargets" id="ENSG00000163041"/>
<dbReference type="PharmGKB" id="PA29140"/>
<dbReference type="VEuPathDB" id="HostDB:ENSG00000132475"/>
<dbReference type="VEuPathDB" id="HostDB:ENSG00000163041"/>
<dbReference type="eggNOG" id="KOG1745">
    <property type="taxonomic scope" value="Eukaryota"/>
</dbReference>
<dbReference type="GeneTree" id="ENSGT01110000267215"/>
<dbReference type="HOGENOM" id="CLU_078295_4_0_1"/>
<dbReference type="InParanoid" id="P84243"/>
<dbReference type="OMA" id="HIFAEMA"/>
<dbReference type="OrthoDB" id="6256050at2759"/>
<dbReference type="PAN-GO" id="P84243">
    <property type="GO annotations" value="1 GO annotation based on evolutionary models"/>
</dbReference>
<dbReference type="PhylomeDB" id="P84243"/>
<dbReference type="TreeFam" id="TF314241"/>
<dbReference type="PathwayCommons" id="P84243"/>
<dbReference type="Reactome" id="R-HSA-1912408">
    <property type="pathway name" value="Pre-NOTCH Transcription and Translation"/>
</dbReference>
<dbReference type="Reactome" id="R-HSA-201722">
    <property type="pathway name" value="Formation of the beta-catenin:TCF transactivating complex"/>
</dbReference>
<dbReference type="Reactome" id="R-HSA-212300">
    <property type="pathway name" value="PRC2 methylates histones and DNA"/>
</dbReference>
<dbReference type="Reactome" id="R-HSA-2299718">
    <property type="pathway name" value="Condensation of Prophase Chromosomes"/>
</dbReference>
<dbReference type="Reactome" id="R-HSA-2559580">
    <property type="pathway name" value="Oxidative Stress Induced Senescence"/>
</dbReference>
<dbReference type="Reactome" id="R-HSA-2559582">
    <property type="pathway name" value="Senescence-Associated Secretory Phenotype (SASP)"/>
</dbReference>
<dbReference type="Reactome" id="R-HSA-427359">
    <property type="pathway name" value="SIRT1 negatively regulates rRNA expression"/>
</dbReference>
<dbReference type="Reactome" id="R-HSA-427389">
    <property type="pathway name" value="ERCC6 (CSB) and EHMT2 (G9a) positively regulate rRNA expression"/>
</dbReference>
<dbReference type="Reactome" id="R-HSA-427413">
    <property type="pathway name" value="NoRC negatively regulates rRNA expression"/>
</dbReference>
<dbReference type="Reactome" id="R-HSA-5250924">
    <property type="pathway name" value="B-WICH complex positively regulates rRNA expression"/>
</dbReference>
<dbReference type="Reactome" id="R-HSA-5334118">
    <property type="pathway name" value="DNA methylation"/>
</dbReference>
<dbReference type="Reactome" id="R-HSA-5578749">
    <property type="pathway name" value="Transcriptional regulation by small RNAs"/>
</dbReference>
<dbReference type="Reactome" id="R-HSA-5617472">
    <property type="pathway name" value="Activation of anterior HOX genes in hindbrain development during early embryogenesis"/>
</dbReference>
<dbReference type="Reactome" id="R-HSA-5625886">
    <property type="pathway name" value="Activated PKN1 stimulates transcription of AR (androgen receptor) regulated genes KLK2 and KLK3"/>
</dbReference>
<dbReference type="Reactome" id="R-HSA-68616">
    <property type="pathway name" value="Assembly of the ORC complex at the origin of replication"/>
</dbReference>
<dbReference type="Reactome" id="R-HSA-73728">
    <property type="pathway name" value="RNA Polymerase I Promoter Opening"/>
</dbReference>
<dbReference type="Reactome" id="R-HSA-73772">
    <property type="pathway name" value="RNA Polymerase I Promoter Escape"/>
</dbReference>
<dbReference type="Reactome" id="R-HSA-8936459">
    <property type="pathway name" value="RUNX1 regulates genes involved in megakaryocyte differentiation and platelet function"/>
</dbReference>
<dbReference type="Reactome" id="R-HSA-8939236">
    <property type="pathway name" value="RUNX1 regulates transcription of genes involved in differentiation of HSCs"/>
</dbReference>
<dbReference type="Reactome" id="R-HSA-9018519">
    <property type="pathway name" value="Estrogen-dependent gene expression"/>
</dbReference>
<dbReference type="Reactome" id="R-HSA-912446">
    <property type="pathway name" value="Meiotic recombination"/>
</dbReference>
<dbReference type="Reactome" id="R-HSA-9616222">
    <property type="pathway name" value="Transcriptional regulation of granulopoiesis"/>
</dbReference>
<dbReference type="Reactome" id="R-HSA-9670095">
    <property type="pathway name" value="Inhibition of DNA recombination at telomere"/>
</dbReference>
<dbReference type="Reactome" id="R-HSA-9710421">
    <property type="pathway name" value="Defective pyroptosis"/>
</dbReference>
<dbReference type="Reactome" id="R-HSA-977225">
    <property type="pathway name" value="Amyloid fiber formation"/>
</dbReference>
<dbReference type="Reactome" id="R-HSA-9821002">
    <property type="pathway name" value="Chromatin modifications during the maternal to zygotic transition (MZT)"/>
</dbReference>
<dbReference type="Reactome" id="R-HSA-9821993">
    <property type="pathway name" value="Replacement of protamines by nucleosomes in the male pronucleus"/>
</dbReference>
<dbReference type="Reactome" id="R-HSA-983231">
    <property type="pathway name" value="Factors involved in megakaryocyte development and platelet production"/>
</dbReference>
<dbReference type="Reactome" id="R-HSA-9841922">
    <property type="pathway name" value="MLL4 and MLL3 complexes regulate expression of PPARG target genes in adipogenesis and hepatic steatosis"/>
</dbReference>
<dbReference type="Reactome" id="R-HSA-9843940">
    <property type="pathway name" value="Regulation of endogenous retroelements by KRAB-ZFP proteins"/>
</dbReference>
<dbReference type="Reactome" id="R-HSA-9843970">
    <property type="pathway name" value="Regulation of endogenous retroelements by the Human Silencing Hub (HUSH) complex"/>
</dbReference>
<dbReference type="Reactome" id="R-HSA-9845323">
    <property type="pathway name" value="Regulation of endogenous retroelements by Piwi-interacting RNAs (piRNAs)"/>
</dbReference>
<dbReference type="SignaLink" id="P84243"/>
<dbReference type="SIGNOR" id="P84243"/>
<dbReference type="BioGRID-ORCS" id="3020">
    <property type="hits" value="263 hits in 725 CRISPR screens"/>
</dbReference>
<dbReference type="BioGRID-ORCS" id="3021">
    <property type="hits" value="149 hits in 1133 CRISPR screens"/>
</dbReference>
<dbReference type="CD-CODE" id="8C2F96ED">
    <property type="entry name" value="Centrosome"/>
</dbReference>
<dbReference type="ChiTaRS" id="H3F3A">
    <property type="organism name" value="human"/>
</dbReference>
<dbReference type="ChiTaRS" id="H3F3B">
    <property type="organism name" value="human"/>
</dbReference>
<dbReference type="EvolutionaryTrace" id="P84243"/>
<dbReference type="GeneWiki" id="H3F3A"/>
<dbReference type="Pharos" id="P84243">
    <property type="development level" value="Tbio"/>
</dbReference>
<dbReference type="PRO" id="PR:P84243"/>
<dbReference type="Proteomes" id="UP000005640">
    <property type="component" value="Chromosome 1"/>
</dbReference>
<dbReference type="Proteomes" id="UP000005640">
    <property type="component" value="Chromosome 17"/>
</dbReference>
<dbReference type="RNAct" id="P84243">
    <property type="molecule type" value="protein"/>
</dbReference>
<dbReference type="Bgee" id="ENSG00000132475">
    <property type="expression patterns" value="Expressed in oocyte and 224 other cell types or tissues"/>
</dbReference>
<dbReference type="ExpressionAtlas" id="P84243">
    <property type="expression patterns" value="baseline and differential"/>
</dbReference>
<dbReference type="GO" id="GO:0001740">
    <property type="term" value="C:Barr body"/>
    <property type="evidence" value="ECO:0007669"/>
    <property type="project" value="Ensembl"/>
</dbReference>
<dbReference type="GO" id="GO:0000781">
    <property type="term" value="C:chromosome, telomeric region"/>
    <property type="evidence" value="ECO:0000314"/>
    <property type="project" value="BHF-UCL"/>
</dbReference>
<dbReference type="GO" id="GO:0070062">
    <property type="term" value="C:extracellular exosome"/>
    <property type="evidence" value="ECO:0007005"/>
    <property type="project" value="UniProtKB"/>
</dbReference>
<dbReference type="GO" id="GO:0005576">
    <property type="term" value="C:extracellular region"/>
    <property type="evidence" value="ECO:0000304"/>
    <property type="project" value="Reactome"/>
</dbReference>
<dbReference type="GO" id="GO:0000939">
    <property type="term" value="C:inner kinetochore"/>
    <property type="evidence" value="ECO:0007669"/>
    <property type="project" value="Ensembl"/>
</dbReference>
<dbReference type="GO" id="GO:0005654">
    <property type="term" value="C:nucleoplasm"/>
    <property type="evidence" value="ECO:0000314"/>
    <property type="project" value="HPA"/>
</dbReference>
<dbReference type="GO" id="GO:0000786">
    <property type="term" value="C:nucleosome"/>
    <property type="evidence" value="ECO:0000314"/>
    <property type="project" value="UniProtKB"/>
</dbReference>
<dbReference type="GO" id="GO:0005634">
    <property type="term" value="C:nucleus"/>
    <property type="evidence" value="ECO:0000314"/>
    <property type="project" value="UniProtKB"/>
</dbReference>
<dbReference type="GO" id="GO:0032991">
    <property type="term" value="C:protein-containing complex"/>
    <property type="evidence" value="ECO:0000314"/>
    <property type="project" value="UniProtKB"/>
</dbReference>
<dbReference type="GO" id="GO:0031492">
    <property type="term" value="F:nucleosomal DNA binding"/>
    <property type="evidence" value="ECO:0000314"/>
    <property type="project" value="UniProtKB"/>
</dbReference>
<dbReference type="GO" id="GO:0046982">
    <property type="term" value="F:protein heterodimerization activity"/>
    <property type="evidence" value="ECO:0007669"/>
    <property type="project" value="InterPro"/>
</dbReference>
<dbReference type="GO" id="GO:0000978">
    <property type="term" value="F:RNA polymerase II cis-regulatory region sequence-specific DNA binding"/>
    <property type="evidence" value="ECO:0000314"/>
    <property type="project" value="UniProtKB"/>
</dbReference>
<dbReference type="GO" id="GO:0000979">
    <property type="term" value="F:RNA polymerase II core promoter sequence-specific DNA binding"/>
    <property type="evidence" value="ECO:0000314"/>
    <property type="project" value="UniProtKB"/>
</dbReference>
<dbReference type="GO" id="GO:0030527">
    <property type="term" value="F:structural constituent of chromatin"/>
    <property type="evidence" value="ECO:0000314"/>
    <property type="project" value="GO_Central"/>
</dbReference>
<dbReference type="GO" id="GO:0008283">
    <property type="term" value="P:cell population proliferation"/>
    <property type="evidence" value="ECO:0007669"/>
    <property type="project" value="Ensembl"/>
</dbReference>
<dbReference type="GO" id="GO:0007566">
    <property type="term" value="P:embryo implantation"/>
    <property type="evidence" value="ECO:0007669"/>
    <property type="project" value="Ensembl"/>
</dbReference>
<dbReference type="GO" id="GO:0008584">
    <property type="term" value="P:male gonad development"/>
    <property type="evidence" value="ECO:0007669"/>
    <property type="project" value="Ensembl"/>
</dbReference>
<dbReference type="GO" id="GO:0035264">
    <property type="term" value="P:multicellular organism growth"/>
    <property type="evidence" value="ECO:0007669"/>
    <property type="project" value="Ensembl"/>
</dbReference>
<dbReference type="GO" id="GO:0042692">
    <property type="term" value="P:muscle cell differentiation"/>
    <property type="evidence" value="ECO:0007669"/>
    <property type="project" value="Ensembl"/>
</dbReference>
<dbReference type="GO" id="GO:1902340">
    <property type="term" value="P:negative regulation of chromosome condensation"/>
    <property type="evidence" value="ECO:0007669"/>
    <property type="project" value="Ensembl"/>
</dbReference>
<dbReference type="GO" id="GO:0006334">
    <property type="term" value="P:nucleosome assembly"/>
    <property type="evidence" value="ECO:0000314"/>
    <property type="project" value="UniProtKB"/>
</dbReference>
<dbReference type="GO" id="GO:0006997">
    <property type="term" value="P:nucleus organization"/>
    <property type="evidence" value="ECO:0007669"/>
    <property type="project" value="Ensembl"/>
</dbReference>
<dbReference type="GO" id="GO:0001556">
    <property type="term" value="P:oocyte maturation"/>
    <property type="evidence" value="ECO:0007669"/>
    <property type="project" value="Ensembl"/>
</dbReference>
<dbReference type="GO" id="GO:0001649">
    <property type="term" value="P:osteoblast differentiation"/>
    <property type="evidence" value="ECO:0007669"/>
    <property type="project" value="Ensembl"/>
</dbReference>
<dbReference type="GO" id="GO:0031508">
    <property type="term" value="P:pericentric heterochromatin formation"/>
    <property type="evidence" value="ECO:0007669"/>
    <property type="project" value="Ensembl"/>
</dbReference>
<dbReference type="GO" id="GO:0030307">
    <property type="term" value="P:positive regulation of cell growth"/>
    <property type="evidence" value="ECO:0000315"/>
    <property type="project" value="UniProtKB"/>
</dbReference>
<dbReference type="GO" id="GO:0090230">
    <property type="term" value="P:regulation of centromere complex assembly"/>
    <property type="evidence" value="ECO:0007669"/>
    <property type="project" value="Ensembl"/>
</dbReference>
<dbReference type="GO" id="GO:0007338">
    <property type="term" value="P:single fertilization"/>
    <property type="evidence" value="ECO:0007669"/>
    <property type="project" value="Ensembl"/>
</dbReference>
<dbReference type="GO" id="GO:0007286">
    <property type="term" value="P:spermatid development"/>
    <property type="evidence" value="ECO:0007669"/>
    <property type="project" value="Ensembl"/>
</dbReference>
<dbReference type="GO" id="GO:0031509">
    <property type="term" value="P:subtelomeric heterochromatin formation"/>
    <property type="evidence" value="ECO:0007669"/>
    <property type="project" value="Ensembl"/>
</dbReference>
<dbReference type="GO" id="GO:0032200">
    <property type="term" value="P:telomere organization"/>
    <property type="evidence" value="ECO:0000304"/>
    <property type="project" value="BHF-UCL"/>
</dbReference>
<dbReference type="CDD" id="cd22911">
    <property type="entry name" value="HFD_H3"/>
    <property type="match status" value="1"/>
</dbReference>
<dbReference type="FunFam" id="1.10.20.10:FF:000078">
    <property type="entry name" value="Histone H3"/>
    <property type="match status" value="1"/>
</dbReference>
<dbReference type="FunFam" id="1.10.20.10:FF:000044">
    <property type="entry name" value="Histone H3.3"/>
    <property type="match status" value="1"/>
</dbReference>
<dbReference type="Gene3D" id="1.10.20.10">
    <property type="entry name" value="Histone, subunit A"/>
    <property type="match status" value="1"/>
</dbReference>
<dbReference type="IDEAL" id="IID00239"/>
<dbReference type="InterPro" id="IPR009072">
    <property type="entry name" value="Histone-fold"/>
</dbReference>
<dbReference type="InterPro" id="IPR007125">
    <property type="entry name" value="Histone_H2A/H2B/H3"/>
</dbReference>
<dbReference type="InterPro" id="IPR000164">
    <property type="entry name" value="Histone_H3/CENP-A"/>
</dbReference>
<dbReference type="PANTHER" id="PTHR11426">
    <property type="entry name" value="HISTONE H3"/>
    <property type="match status" value="1"/>
</dbReference>
<dbReference type="Pfam" id="PF00125">
    <property type="entry name" value="Histone"/>
    <property type="match status" value="1"/>
</dbReference>
<dbReference type="PRINTS" id="PR00622">
    <property type="entry name" value="HISTONEH3"/>
</dbReference>
<dbReference type="SMART" id="SM00428">
    <property type="entry name" value="H3"/>
    <property type="match status" value="1"/>
</dbReference>
<dbReference type="SUPFAM" id="SSF47113">
    <property type="entry name" value="Histone-fold"/>
    <property type="match status" value="1"/>
</dbReference>
<dbReference type="PROSITE" id="PS00322">
    <property type="entry name" value="HISTONE_H3_1"/>
    <property type="match status" value="1"/>
</dbReference>
<dbReference type="PROSITE" id="PS00959">
    <property type="entry name" value="HISTONE_H3_2"/>
    <property type="match status" value="1"/>
</dbReference>